<gene>
    <name type="primary">F7</name>
</gene>
<keyword id="KW-0002">3D-structure</keyword>
<keyword id="KW-0025">Alternative splicing</keyword>
<keyword id="KW-0094">Blood coagulation</keyword>
<keyword id="KW-0106">Calcium</keyword>
<keyword id="KW-0165">Cleavage on pair of basic residues</keyword>
<keyword id="KW-0903">Direct protein sequencing</keyword>
<keyword id="KW-0225">Disease variant</keyword>
<keyword id="KW-1015">Disulfide bond</keyword>
<keyword id="KW-0245">EGF-like domain</keyword>
<keyword id="KW-0301">Gamma-carboxyglutamic acid</keyword>
<keyword id="KW-0325">Glycoprotein</keyword>
<keyword id="KW-0356">Hemostasis</keyword>
<keyword id="KW-0378">Hydrolase</keyword>
<keyword id="KW-0379">Hydroxylation</keyword>
<keyword id="KW-0582">Pharmaceutical</keyword>
<keyword id="KW-0645">Protease</keyword>
<keyword id="KW-1267">Proteomics identification</keyword>
<keyword id="KW-1185">Reference proteome</keyword>
<keyword id="KW-0677">Repeat</keyword>
<keyword id="KW-0964">Secreted</keyword>
<keyword id="KW-0720">Serine protease</keyword>
<keyword id="KW-0732">Signal</keyword>
<keyword id="KW-0865">Zymogen</keyword>
<organism>
    <name type="scientific">Homo sapiens</name>
    <name type="common">Human</name>
    <dbReference type="NCBI Taxonomy" id="9606"/>
    <lineage>
        <taxon>Eukaryota</taxon>
        <taxon>Metazoa</taxon>
        <taxon>Chordata</taxon>
        <taxon>Craniata</taxon>
        <taxon>Vertebrata</taxon>
        <taxon>Euteleostomi</taxon>
        <taxon>Mammalia</taxon>
        <taxon>Eutheria</taxon>
        <taxon>Euarchontoglires</taxon>
        <taxon>Primates</taxon>
        <taxon>Haplorrhini</taxon>
        <taxon>Catarrhini</taxon>
        <taxon>Hominidae</taxon>
        <taxon>Homo</taxon>
    </lineage>
</organism>
<reference key="1">
    <citation type="journal article" date="1986" name="Proc. Natl. Acad. Sci. U.S.A.">
        <title>Characterization of a cDNA coding for human factor VII.</title>
        <authorList>
            <person name="Hagen F.S."/>
            <person name="Gray C.L."/>
            <person name="O'Hara P.J."/>
            <person name="Grant F.J."/>
            <person name="Saari G.C."/>
            <person name="Woodbury R.G."/>
            <person name="Hart C.E."/>
            <person name="Insley M.Y."/>
            <person name="Kisiel W."/>
            <person name="Kurachi K."/>
            <person name="Davie E.W."/>
        </authorList>
    </citation>
    <scope>NUCLEOTIDE SEQUENCE [MRNA] (ISOFORMS A AND B)</scope>
    <source>
        <tissue>Liver</tissue>
    </source>
</reference>
<reference key="2">
    <citation type="journal article" date="1987" name="Proc. Natl. Acad. Sci. U.S.A.">
        <title>Nucleotide sequence of the gene coding for human factor VII, a vitamin K-dependent protein participating in blood coagulation.</title>
        <authorList>
            <person name="O'Hara P.J."/>
            <person name="Grant F.J."/>
            <person name="Haldeman B.A."/>
            <person name="Gray C.L."/>
            <person name="Insley M.Y."/>
            <person name="Hagen F.S."/>
            <person name="Murray M.J."/>
        </authorList>
    </citation>
    <scope>NUCLEOTIDE SEQUENCE [GENOMIC DNA]</scope>
</reference>
<reference key="3">
    <citation type="journal article" date="2006" name="Hum. Genet.">
        <title>Human F7 sequence is split into three deep clades that are related to FVII plasma levels.</title>
        <authorList>
            <person name="Sabater-Lleal M."/>
            <person name="Soria J.M."/>
            <person name="Bertranpetit J."/>
            <person name="Almasy L."/>
            <person name="Blangero J."/>
            <person name="Fontcuberta J."/>
            <person name="Calafell F."/>
        </authorList>
    </citation>
    <scope>NUCLEOTIDE SEQUENCE [GENOMIC DNA]</scope>
    <scope>VARIANTS VAL-354 AND GLN-413</scope>
</reference>
<reference key="4">
    <citation type="submission" date="2002-12" db="EMBL/GenBank/DDBJ databases">
        <title>Complete dissection of a human quantitative trait locus: allelic architecture of F7 and factor VII levels.</title>
        <authorList>
            <person name="Soria J.M."/>
            <person name="Almasy L."/>
            <person name="Souto J.C."/>
            <person name="Sabater M."/>
            <person name="Fontcuberta J."/>
            <person name="Blangero J."/>
        </authorList>
    </citation>
    <scope>NUCLEOTIDE SEQUENCE [GENOMIC DNA]</scope>
</reference>
<reference key="5">
    <citation type="submission" date="2008-03" db="EMBL/GenBank/DDBJ databases">
        <authorList>
            <person name="Masroori N."/>
            <person name="Habibi Roudkenar M."/>
            <person name="Halabian R."/>
        </authorList>
    </citation>
    <scope>NUCLEOTIDE SEQUENCE [MRNA] (ISOFORM A)</scope>
</reference>
<reference key="6">
    <citation type="submission" date="2002-01" db="EMBL/GenBank/DDBJ databases">
        <authorList>
            <consortium name="SeattleSNPs variation discovery resource"/>
        </authorList>
    </citation>
    <scope>NUCLEOTIDE SEQUENCE [GENOMIC DNA]</scope>
    <scope>VARIANTS THR-352; GLN-413 AND LYS-445</scope>
</reference>
<reference key="7">
    <citation type="submission" date="2007-02" db="EMBL/GenBank/DDBJ databases">
        <authorList>
            <consortium name="NHLBI resequencing and genotyping service (RS&amp;G)"/>
        </authorList>
    </citation>
    <scope>NUCLEOTIDE SEQUENCE [GENOMIC DNA]</scope>
</reference>
<reference key="8">
    <citation type="journal article" date="2004" name="Nature">
        <title>The DNA sequence and analysis of human chromosome 13.</title>
        <authorList>
            <person name="Dunham A."/>
            <person name="Matthews L.H."/>
            <person name="Burton J."/>
            <person name="Ashurst J.L."/>
            <person name="Howe K.L."/>
            <person name="Ashcroft K.J."/>
            <person name="Beare D.M."/>
            <person name="Burford D.C."/>
            <person name="Hunt S.E."/>
            <person name="Griffiths-Jones S."/>
            <person name="Jones M.C."/>
            <person name="Keenan S.J."/>
            <person name="Oliver K."/>
            <person name="Scott C.E."/>
            <person name="Ainscough R."/>
            <person name="Almeida J.P."/>
            <person name="Ambrose K.D."/>
            <person name="Andrews D.T."/>
            <person name="Ashwell R.I.S."/>
            <person name="Babbage A.K."/>
            <person name="Bagguley C.L."/>
            <person name="Bailey J."/>
            <person name="Bannerjee R."/>
            <person name="Barlow K.F."/>
            <person name="Bates K."/>
            <person name="Beasley H."/>
            <person name="Bird C.P."/>
            <person name="Bray-Allen S."/>
            <person name="Brown A.J."/>
            <person name="Brown J.Y."/>
            <person name="Burrill W."/>
            <person name="Carder C."/>
            <person name="Carter N.P."/>
            <person name="Chapman J.C."/>
            <person name="Clamp M.E."/>
            <person name="Clark S.Y."/>
            <person name="Clarke G."/>
            <person name="Clee C.M."/>
            <person name="Clegg S.C."/>
            <person name="Cobley V."/>
            <person name="Collins J.E."/>
            <person name="Corby N."/>
            <person name="Coville G.J."/>
            <person name="Deloukas P."/>
            <person name="Dhami P."/>
            <person name="Dunham I."/>
            <person name="Dunn M."/>
            <person name="Earthrowl M.E."/>
            <person name="Ellington A.G."/>
            <person name="Faulkner L."/>
            <person name="Frankish A.G."/>
            <person name="Frankland J."/>
            <person name="French L."/>
            <person name="Garner P."/>
            <person name="Garnett J."/>
            <person name="Gilbert J.G.R."/>
            <person name="Gilson C.J."/>
            <person name="Ghori J."/>
            <person name="Grafham D.V."/>
            <person name="Gribble S.M."/>
            <person name="Griffiths C."/>
            <person name="Hall R.E."/>
            <person name="Hammond S."/>
            <person name="Harley J.L."/>
            <person name="Hart E.A."/>
            <person name="Heath P.D."/>
            <person name="Howden P.J."/>
            <person name="Huckle E.J."/>
            <person name="Hunt P.J."/>
            <person name="Hunt A.R."/>
            <person name="Johnson C."/>
            <person name="Johnson D."/>
            <person name="Kay M."/>
            <person name="Kimberley A.M."/>
            <person name="King A."/>
            <person name="Laird G.K."/>
            <person name="Langford C.J."/>
            <person name="Lawlor S."/>
            <person name="Leongamornlert D.A."/>
            <person name="Lloyd D.M."/>
            <person name="Lloyd C."/>
            <person name="Loveland J.E."/>
            <person name="Lovell J."/>
            <person name="Martin S."/>
            <person name="Mashreghi-Mohammadi M."/>
            <person name="McLaren S.J."/>
            <person name="McMurray A."/>
            <person name="Milne S."/>
            <person name="Moore M.J.F."/>
            <person name="Nickerson T."/>
            <person name="Palmer S.A."/>
            <person name="Pearce A.V."/>
            <person name="Peck A.I."/>
            <person name="Pelan S."/>
            <person name="Phillimore B."/>
            <person name="Porter K.M."/>
            <person name="Rice C.M."/>
            <person name="Searle S."/>
            <person name="Sehra H.K."/>
            <person name="Shownkeen R."/>
            <person name="Skuce C.D."/>
            <person name="Smith M."/>
            <person name="Steward C.A."/>
            <person name="Sycamore N."/>
            <person name="Tester J."/>
            <person name="Thomas D.W."/>
            <person name="Tracey A."/>
            <person name="Tromans A."/>
            <person name="Tubby B."/>
            <person name="Wall M."/>
            <person name="Wallis J.M."/>
            <person name="West A.P."/>
            <person name="Whitehead S.L."/>
            <person name="Willey D.L."/>
            <person name="Wilming L."/>
            <person name="Wray P.W."/>
            <person name="Wright M.W."/>
            <person name="Young L."/>
            <person name="Coulson A."/>
            <person name="Durbin R.M."/>
            <person name="Hubbard T."/>
            <person name="Sulston J.E."/>
            <person name="Beck S."/>
            <person name="Bentley D.R."/>
            <person name="Rogers J."/>
            <person name="Ross M.T."/>
        </authorList>
    </citation>
    <scope>NUCLEOTIDE SEQUENCE [LARGE SCALE GENOMIC DNA]</scope>
</reference>
<reference key="9">
    <citation type="journal article" date="2004" name="Genome Res.">
        <title>The status, quality, and expansion of the NIH full-length cDNA project: the Mammalian Gene Collection (MGC).</title>
        <authorList>
            <consortium name="The MGC Project Team"/>
        </authorList>
    </citation>
    <scope>NUCLEOTIDE SEQUENCE [LARGE SCALE MRNA] (ISOFORM B)</scope>
</reference>
<reference key="10">
    <citation type="journal article" date="1988" name="Biochemistry">
        <title>Amino acid sequence and posttranslational modifications of human factor VIIa from plasma and transfected baby hamster kidney cells.</title>
        <authorList>
            <person name="Thim L."/>
            <person name="Bjoern S."/>
            <person name="Christensen M."/>
            <person name="Nicolaisen E.M."/>
            <person name="Lund-Hansen T."/>
            <person name="Pedersen A.H."/>
            <person name="Hedner U."/>
        </authorList>
    </citation>
    <scope>PROTEIN SEQUENCE OF 61-466</scope>
    <scope>GAMMA-CARBOXYGLUTAMATION AT GLU-66; GLU-67; GLU-74; GLU-76; GLU-79; GLU-80; GLU-85; GLU-86; GLU-89 AND GLU-95</scope>
    <scope>HYDROXYLATION AT ASP-123</scope>
    <scope>GLYCOSYLATION AT ASN-205 AND ASN-382</scope>
</reference>
<reference key="11">
    <citation type="journal article" date="1994" name="Br. J. Haematol.">
        <title>Molecular defects in CRM+ factor VII deficiencies: modelling of missense mutations in the catalytic domain of FVII.</title>
        <authorList>
            <person name="Bernardi F."/>
            <person name="Liney D.L."/>
            <person name="Patracchini P."/>
            <person name="Gemmati D."/>
            <person name="Legnani C."/>
            <person name="Arcieri P."/>
            <person name="Pinotti M."/>
            <person name="Redaelli R."/>
            <person name="Ballerini G."/>
            <person name="Pemberton S."/>
            <person name="Wacey A.I."/>
            <person name="Mariani G."/>
            <person name="Tuddenham E.G.D."/>
            <person name="Marchetti G."/>
        </authorList>
    </citation>
    <scope>NUCLEOTIDE SEQUENCE [GENOMIC DNA] OF 354-412</scope>
    <scope>VARIANTS FA7D ILE-358; GLN-364; PHE-370 AND ARG-402</scope>
    <scope>VARIANT GLN-413</scope>
</reference>
<reference key="12">
    <citation type="journal article" date="1977" name="Proc. Natl. Acad. Sci. U.S.A.">
        <title>Activation of factor IX by the reaction product of tissue factor and factor VII: additional pathway for initiating blood coagulation.</title>
        <authorList>
            <person name="Osterud B."/>
            <person name="Rapaport S.I."/>
        </authorList>
    </citation>
    <scope>FUNCTION</scope>
</reference>
<reference key="13">
    <citation type="journal article" date="1989" name="J. Biol. Chem.">
        <title>Identification of a disaccharide (Xyl-Glc) and a trisaccharide (Xyl2-Glc) O-glycosidically linked to a serine residue in the first epidermal growth factor-like domain of human factors VII and IX and protein Z and bovine protein Z.</title>
        <authorList>
            <person name="Nishimura H."/>
            <person name="Kawabata S."/>
            <person name="Kisiel W."/>
            <person name="Hase S."/>
            <person name="Ikenaka T."/>
            <person name="Takao T."/>
            <person name="Shimonishi Y."/>
            <person name="Iwanaga S."/>
        </authorList>
    </citation>
    <scope>GLYCOSYLATION AT SER-112</scope>
    <scope>STRUCTURE OF CARBOHYDRATE ON SER-112</scope>
</reference>
<reference key="14">
    <citation type="journal article" date="1990" name="Adv. Exp. Med. Biol.">
        <title>A new trisaccharide sugar chain linked to a serine residue in the first EGF-like domain of clotting factors VII and IX and protein Z.</title>
        <authorList>
            <person name="Iwanaga S."/>
            <person name="Nishimura H."/>
            <person name="Kawabata S."/>
            <person name="Kisiel W."/>
            <person name="Hase S."/>
            <person name="Ikenaka T."/>
        </authorList>
    </citation>
    <scope>GLYCOSYLATION AT SER-112</scope>
    <scope>STRUCTURE OF CARBOHYDRATE ON SER-112</scope>
</reference>
<reference key="15">
    <citation type="journal article" date="1991" name="J. Biol. Chem.">
        <title>Human plasma and recombinant factor VII. Characterization of O-glycosylations at serine residues 52 and 60 and effects of site-directed mutagenesis of serine 52 to alanine.</title>
        <authorList>
            <person name="Bjoern S."/>
            <person name="Foster D.C."/>
            <person name="Thim L."/>
            <person name="Wiberg F.C."/>
            <person name="Christensen M."/>
            <person name="Komiyama Y."/>
            <person name="Pedersen A.H."/>
            <person name="Kisiel W."/>
        </authorList>
    </citation>
    <scope>GLYCOSYLATION AT SER-112 AND SER-120</scope>
</reference>
<reference key="16">
    <citation type="journal article" date="1996" name="Glycobiology">
        <title>Identification of a GDP-L-fucose:polypeptide fucosyltransferase and enzymatic addition of O-linked fucose to EGF domains.</title>
        <authorList>
            <person name="Wang Y."/>
            <person name="Lee G.F."/>
            <person name="Kelley R.F."/>
            <person name="Spellman M.W."/>
        </authorList>
    </citation>
    <scope>GLYCOSYLATION AT SER-120</scope>
    <scope>IDENTIFICATION BY MASS SPECTROMETRY</scope>
</reference>
<reference key="17">
    <citation type="journal article" date="2009" name="Cell">
        <title>Cotranslational and posttranslational N-glycosylation of polypeptides by distinct mammalian OST isoforms.</title>
        <authorList>
            <person name="Ruiz-Canada C."/>
            <person name="Kelleher D.J."/>
            <person name="Gilmore R."/>
        </authorList>
    </citation>
    <scope>GLYCOSYLATION AT ASN-205 AND ASN-382</scope>
</reference>
<reference key="18">
    <citation type="journal article" date="2011" name="Proc. Natl. Acad. Sci. U.S.A.">
        <title>Rumi functions as both a protein O-glucosyltransferase and a protein O-xylosyltransferase.</title>
        <authorList>
            <person name="Takeuchi H."/>
            <person name="Fernandez-Valdivia R.C."/>
            <person name="Caswell D.S."/>
            <person name="Nita-Lazar A."/>
            <person name="Rana N.A."/>
            <person name="Garner T.P."/>
            <person name="Weldeghiorghis T.K."/>
            <person name="Macnaughtan M.A."/>
            <person name="Jafar-Nejad H."/>
            <person name="Haltiwanger R.S."/>
        </authorList>
    </citation>
    <scope>GLYCOSYLATION AT SER-112</scope>
    <scope>MUTAGENESIS OF SER-112 AND SER-113</scope>
</reference>
<reference key="19">
    <citation type="journal article" date="2021" name="Int. J. Mol. Sci.">
        <title>Ixodes ricinus Salivary Serpin Iripin-8 Inhibits the Intrinsic Pathway of Coagulation and Complement.</title>
        <authorList>
            <person name="Kotal J."/>
            <person name="Polderdijk S.G.I."/>
            <person name="Langhansova H."/>
            <person name="Ederova M."/>
            <person name="Martins L.A."/>
            <person name="Berankova Z."/>
            <person name="Chlastakova A."/>
            <person name="Hajdusek O."/>
            <person name="Kotsyfakis M."/>
            <person name="Huntington J.A."/>
            <person name="Chmelar J."/>
        </authorList>
    </citation>
    <scope>INTERACTION WITH TICK IRIPIN-8</scope>
</reference>
<reference key="20">
    <citation type="journal article" date="1996" name="Nature">
        <title>The crystal structure of the complex of blood coagulation factor VIIa with soluble tissue factor.</title>
        <authorList>
            <person name="Banner D.W."/>
            <person name="D'Arcy A."/>
            <person name="Chene C."/>
            <person name="Winkler F.K."/>
            <person name="Guha A."/>
            <person name="Konigsberg W.H."/>
            <person name="Nemreson Y."/>
            <person name="Kirchhofer D."/>
        </authorList>
    </citation>
    <scope>X-RAY CRYSTALLOGRAPHY (2.0 ANGSTROMS) OF FVIIA IN COMPLEX WITH TF</scope>
</reference>
<reference key="21">
    <citation type="journal article" date="1999" name="J. Mol. Biol.">
        <title>Structure of extracellular tissue factor complexed with factor VIIa inhibited with a BPTI mutant.</title>
        <authorList>
            <person name="Zhang E."/>
            <person name="St Charles R."/>
            <person name="Tulinsky A."/>
        </authorList>
    </citation>
    <scope>X-RAY CRYSTALLOGRAPHY (2.1 ANGSTROMS) OF FVIIA IN COMPLEX WITH TF</scope>
</reference>
<reference key="22">
    <citation type="journal article" date="1998" name="Biochemistry">
        <title>Solution structure of the N-terminal EGF-like domain from human factor VII.</title>
        <authorList>
            <person name="Muranyi A."/>
            <person name="Finn B.E."/>
            <person name="Gippert G.P."/>
            <person name="Forsen S."/>
            <person name="Stenflo J."/>
            <person name="Drakenberg T."/>
        </authorList>
    </citation>
    <scope>STRUCTURE BY NMR OF 105-145</scope>
</reference>
<reference key="23">
    <citation type="journal article" date="1991" name="Blood">
        <title>Purification and characterization of factor VII 304-Gln: a variant molecule with reduced activity isolated from a clinically unaffected male.</title>
        <authorList>
            <person name="O'Brien D.P."/>
            <person name="Gale K.M."/>
            <person name="Anderson J.S."/>
            <person name="McVey J.H."/>
            <person name="Miller G.J."/>
            <person name="Meade T.W."/>
            <person name="Tuddenham E.G.D."/>
        </authorList>
    </citation>
    <scope>VARIANT FA7D GLN-364</scope>
</reference>
<reference key="24">
    <citation type="journal article" date="1992" name="Hum. Genet.">
        <title>Detection of two missense mutations and characterization of a repeat polymorphism in the factor VII gene (F7).</title>
        <authorList>
            <person name="Marchetti G."/>
            <person name="Patracchini P."/>
            <person name="Gemmati D."/>
            <person name="Derosa V."/>
            <person name="Pinotti M."/>
            <person name="Rodorigo G."/>
            <person name="Casonato A."/>
            <person name="Girolami A."/>
            <person name="Bernardi F."/>
        </authorList>
    </citation>
    <scope>VARIANTS FA7D GLN-364 AND PHE-370</scope>
</reference>
<reference key="25">
    <citation type="journal article" date="1993" name="Hum. Genet.">
        <title>Molecular analysis of factor VII deficiency in Italy: a frequent mutation (FVII Lazio) in a repeated intronic region.</title>
        <authorList>
            <person name="Bernardi F."/>
            <person name="Patracchini P."/>
            <person name="Gemmati D."/>
            <person name="Ferrati M."/>
            <person name="Arcieri P."/>
            <person name="Papacchini M."/>
            <person name="Redaelli R."/>
            <person name="Baudo F."/>
            <person name="Mariani G."/>
            <person name="Marchetti G."/>
        </authorList>
    </citation>
    <scope>VARIANT FA7D CYS-157</scope>
</reference>
<reference key="26">
    <citation type="journal article" date="1993" name="Hum. Mol. Genet.">
        <title>A missense mutation (178Cys--&gt;Tyr) and two neutral dimorphisms (115His and 333Ser) in the human coagulation factor VII gene.</title>
        <authorList>
            <person name="Marchetti G."/>
            <person name="Ferrati M."/>
            <person name="Patracchini P."/>
            <person name="Redaelli R."/>
            <person name="Bernardi F."/>
        </authorList>
    </citation>
    <scope>VARIANT FA7D TYR-238</scope>
</reference>
<reference key="27">
    <citation type="journal article" date="1993" name="Hum. Mol. Genet.">
        <title>Detection of missense mutations by single-strand conformational polymorphism (SSCP) analysis in five dysfunctional variants of coagulation factor VII.</title>
        <authorList>
            <person name="Takamiya O."/>
            <person name="Kemball-Cook G."/>
            <person name="Martin D.M.A."/>
            <person name="Cooper D.N."/>
            <person name="von Felten A."/>
            <person name="Meili E."/>
            <person name="Hahn I."/>
            <person name="Prangnell D.R."/>
            <person name="Lumley H."/>
            <person name="Tuddenham E.G.D."/>
            <person name="McVey J.H."/>
        </authorList>
    </citation>
    <scope>VARIANTS FA7D GLN-139; TRP-139; ARG-160; GLU-197 AND GLN-364</scope>
</reference>
<reference key="28">
    <citation type="journal article" date="1994" name="Blood">
        <title>Severe factor VII deficiency caused by mutations abolishing the cleavage site for activation and altering binding to tissue factor.</title>
        <authorList>
            <person name="Chaing S."/>
            <person name="Clarke B."/>
            <person name="Sridhara S."/>
            <person name="Chu K."/>
            <person name="Friedman P."/>
            <person name="Vandusen W."/>
            <person name="Roberts H.R."/>
            <person name="Blajchman M."/>
            <person name="Monroe D.M."/>
            <person name="High K.A."/>
        </authorList>
    </citation>
    <scope>VARIANTS FA7D GLN-139 AND GLN-212</scope>
</reference>
<reference key="29">
    <citation type="journal article" date="1994" name="Hum. Hered.">
        <title>A common Ser/Thr polymorphism in the perforin-homologous region of human complement component C7.</title>
        <authorList>
            <person name="Dewald G."/>
            <person name="Noethen M.M."/>
            <person name="Ruther K."/>
        </authorList>
    </citation>
    <scope>VARIANT SER-367</scope>
</reference>
<reference key="30">
    <citation type="journal article" date="1994" name="Hum. Mol. Genet.">
        <title>Topologically equivalent mutations causing dysfunctional coagulation factors VII (294Ala--&gt;Val) and X (334Ser--&gt;Pro).</title>
        <authorList>
            <person name="Bernardi F."/>
            <person name="Castaman G."/>
            <person name="Redaelli R."/>
            <person name="Pinotti M."/>
            <person name="Lunghi B."/>
            <person name="Rodeghiero F."/>
            <person name="Marchetti G."/>
        </authorList>
    </citation>
    <scope>VARIANT FA7D VAL-354</scope>
</reference>
<reference key="31">
    <citation type="journal article" date="1994" name="Thromb. Haemost.">
        <title>Factor VII Mie: homozygous asymptomatic type I deficiency caused by an amino acid substitution of His (CAC) for Arg(247) (CGC) in the catalytic domain.</title>
        <authorList>
            <person name="Ohiwa M."/>
            <person name="Hayashi T."/>
            <person name="Wada H."/>
            <person name="Minamikawa K."/>
            <person name="Shirakawa S."/>
            <person name="Suzuki K."/>
        </authorList>
    </citation>
    <scope>VARIANT FA7D HIS-307</scope>
</reference>
<reference key="32">
    <citation type="journal article" date="1996" name="Blood">
        <title>A Thr359Met mutation in factor VII of a patient with a hereditary deficiency causes defective secretion of the molecule.</title>
        <authorList>
            <person name="Arbini A.A."/>
            <person name="Mannucci P.M."/>
            <person name="Bauer K.A."/>
        </authorList>
    </citation>
    <scope>VARIANT FA7D MET-419</scope>
</reference>
<reference key="33">
    <citation type="journal article" date="1996" name="Hum. Mutat.">
        <title>Mutation pattern in clinically asymptomatic coagulation factor VII deficiency.</title>
        <authorList>
            <person name="Bernardi F."/>
            <person name="Castaman G."/>
            <person name="Pinotti M."/>
            <person name="Ferraresi P."/>
            <person name="di Iasio M.G."/>
            <person name="Lunghi B."/>
            <person name="Rodeghiero F."/>
            <person name="Marchetti G."/>
        </authorList>
    </citation>
    <scope>VARIANTS FA7D TRP-283; LYS-325; VAL-358; GLN-364 AND GLU-402</scope>
    <scope>VARIANT GLN-413</scope>
</reference>
<reference key="34">
    <citation type="journal article" date="1996" name="J. Biol. Chem.">
        <title>Factor VII central. A novel mutation in the catalytic domain that reduces tissue factor binding, impairs activation by factor Xa, and abolishes amidolytic and coagulant activity.</title>
        <authorList>
            <person name="Bharadwaj D."/>
            <person name="Iino M."/>
            <person name="Kontoyianni M."/>
            <person name="Smith K.J."/>
            <person name="Foster D.C."/>
            <person name="Kisiel W."/>
        </authorList>
    </citation>
    <scope>VARIANT FA7D SER-388</scope>
    <scope>CHARACTERIZATION OF VARIANT FA7D SER-388</scope>
</reference>
<reference key="35">
    <citation type="journal article" date="1996" name="Thromb. Haemost.">
        <title>Ala244Val is a common, probably ancient mutation causing factor VII deficiency in Moroccan and Iranian Jews.</title>
        <authorList>
            <person name="Tamary H."/>
            <person name="Fromovich Y."/>
            <person name="Shalmon L."/>
            <person name="Reich Z."/>
            <person name="Dym O."/>
            <person name="Lanir N."/>
            <person name="Brenner B."/>
            <person name="Paz M."/>
            <person name="Luder A.S."/>
            <person name="Blau O."/>
            <person name="Korostishevsky M."/>
            <person name="Zaizov R."/>
            <person name="Seligsohn U."/>
        </authorList>
    </citation>
    <scope>VARIANT FA7D VAL-304</scope>
</reference>
<reference key="36">
    <citation type="journal article" date="1998" name="Blood">
        <title>Factor VII deficiency caused by a structural variant N57D of the first epidermal growth factor domain.</title>
        <authorList>
            <person name="Leonard B.J."/>
            <person name="Chen Q."/>
            <person name="Blajchman M.A."/>
            <person name="Ofosu F.A."/>
            <person name="Sridhara S."/>
            <person name="Yang D."/>
            <person name="Clarke B.J."/>
        </authorList>
    </citation>
    <scope>VARIANT FA7D ASP-117</scope>
    <scope>CHARACTERIZATION OF VARIANT FA7D ASP-117</scope>
</reference>
<reference key="37">
    <citation type="journal article" date="1998" name="Br. J. Haematol.">
        <title>Factor VII Morioka (FVII L-26P): a homozygous missense mutation in the signal sequence identified in a patient with factor VII deficiency.</title>
        <authorList>
            <person name="Ozawa T."/>
            <person name="Takikawa Y."/>
            <person name="Niiya K."/>
            <person name="Ejiri N."/>
            <person name="Suzuki K."/>
            <person name="Sato S."/>
            <person name="Sakuragawa N."/>
        </authorList>
    </citation>
    <scope>VARIANT FA7D PRO-13</scope>
</reference>
<reference key="38">
    <citation type="journal article" date="1998" name="Hum. Mutat. Suppl.">
        <title>Two new missense mutations (P134T and A244V) in the coagulation factor VII gene.</title>
        <authorList>
            <person name="Alshinawi C."/>
            <person name="Scerri C."/>
            <person name="Galdies R."/>
            <person name="Aquilina A."/>
            <person name="Felice A.E."/>
        </authorList>
    </citation>
    <scope>VARIANTS FA7D THR-194 AND VAL-304</scope>
</reference>
<reference key="39">
    <citation type="journal article" date="1999" name="Nat. Genet.">
        <title>Characterization of single-nucleotide polymorphisms in coding regions of human genes.</title>
        <authorList>
            <person name="Cargill M."/>
            <person name="Altshuler D."/>
            <person name="Ireland J."/>
            <person name="Sklar P."/>
            <person name="Ardlie K."/>
            <person name="Patil N."/>
            <person name="Shaw N."/>
            <person name="Lane C.R."/>
            <person name="Lim E.P."/>
            <person name="Kalyanaraman N."/>
            <person name="Nemesh J."/>
            <person name="Ziaugra L."/>
            <person name="Friedland L."/>
            <person name="Rolfe A."/>
            <person name="Warrington J."/>
            <person name="Lipshutz R."/>
            <person name="Daley G.Q."/>
            <person name="Lander E.S."/>
        </authorList>
    </citation>
    <scope>VARIANTS ASP-295 AND GLN-413</scope>
</reference>
<reference key="40">
    <citation type="journal article" date="1999" name="Nat. Genet.">
        <authorList>
            <person name="Cargill M."/>
            <person name="Altshuler D."/>
            <person name="Ireland J."/>
            <person name="Sklar P."/>
            <person name="Ardlie K."/>
            <person name="Patil N."/>
            <person name="Shaw N."/>
            <person name="Lane C.R."/>
            <person name="Lim E.P."/>
            <person name="Kalyanaraman N."/>
            <person name="Nemesh J."/>
            <person name="Ziaugra L."/>
            <person name="Friedland L."/>
            <person name="Rolfe A."/>
            <person name="Warrington J."/>
            <person name="Lipshutz R."/>
            <person name="Daley G.Q."/>
            <person name="Lander E.S."/>
        </authorList>
    </citation>
    <scope>ERRATUM OF PUBMED:10391209</scope>
</reference>
<reference key="41">
    <citation type="journal article" date="2000" name="Br. J. Haematol.">
        <title>Two novel factor VII gene mutations in a Chinese family with factor VII deficiency.</title>
        <authorList>
            <person name="Au W.Y."/>
            <person name="Lam C.C.K."/>
            <person name="Chan E.C."/>
            <person name="Kwong Y.L."/>
        </authorList>
    </citation>
    <scope>VARIANT FA7D GLY-389</scope>
</reference>
<reference key="42">
    <citation type="journal article" date="2000" name="Hum. Genet.">
        <title>Molecular analysis of the genotype-phenotype relationship in factor VII deficiency.</title>
        <authorList>
            <person name="Millar D.S."/>
            <person name="Kemball-Cook G."/>
            <person name="McVey J.H."/>
            <person name="Tuddenham E.G.D."/>
            <person name="Mumford A.D."/>
            <person name="Attock G.B."/>
            <person name="Reverter J.C."/>
            <person name="Lanir N."/>
            <person name="Parapia L.A."/>
            <person name="Reynaud J."/>
            <person name="Meili E."/>
            <person name="von Felton A."/>
            <person name="Martinowitz U."/>
            <person name="Prangnell D.R."/>
            <person name="Krawczak M."/>
            <person name="Cooper D.N."/>
        </authorList>
    </citation>
    <scope>VARIANTS FA7D GLN-73; GLN-79; PHE-121; PRO-125; CYS-128; TRP-139; SER-151; VAL-157; ARG-160; ARG-195; ASN-241; HIS-302; ASN-302; THR-304; VAL-304; CYS-307; MET-332; VAL-354; ILE-358; PHE-370; GLY-389; SER-391 AND GLU-435</scope>
</reference>
<reference key="43">
    <citation type="journal article" date="2000" name="Hum. Mutat.">
        <title>Twenty two novel mutations of the factor VII gene in factor VII deficiency.</title>
        <authorList>
            <person name="Wulff K."/>
            <person name="Herrmann F.H."/>
        </authorList>
    </citation>
    <scope>VARIANTS FA7D LEU-64; PRO-120; CYS-128; LYS-154; SER-157; ARG-160; ARG-195; GLN-212; ASP-216; TYR-254; THR-266; HIS-302; VAL-304; CYS-307; MET-312; LYS-325; PHE-341; VAL-354; ILE-358; ARG-363; PHE-370; HIS-403 AND MET-419</scope>
</reference>
<reference key="44">
    <citation type="journal article" date="2000" name="N. Engl. J. Med.">
        <title>Polymorphisms in the factor VII gene and the risk of myocardial infarction in patients with coronary artery disease.</title>
        <authorList>
            <person name="Girelli D."/>
            <person name="Russo C."/>
            <person name="Ferraresi P."/>
            <person name="Olivieri O."/>
            <person name="Pinotti M."/>
            <person name="Friso S."/>
            <person name="Manzato F."/>
            <person name="Mazzucco A."/>
            <person name="Bernardi F."/>
            <person name="Corrocher R."/>
        </authorList>
    </citation>
    <scope>VARIANT GLN-413</scope>
</reference>
<reference key="45">
    <citation type="journal article" date="2002" name="Br. J. Haematol.">
        <title>Two double heterozygous mutations in the F7 gene show different manifestations.</title>
        <authorList>
            <person name="Nagaizumi K."/>
            <person name="Inaba H."/>
            <person name="Suzuki T."/>
            <person name="Hatta Y."/>
            <person name="Hagiwara T."/>
            <person name="Amano K."/>
            <person name="Arai M."/>
            <person name="Fukutake K."/>
        </authorList>
    </citation>
    <scope>VARIANTS FA7D LYS-85 AND GLN-408</scope>
</reference>
<reference key="46">
    <citation type="journal article" date="2004" name="Br. J. Haematol.">
        <title>A patient homozygous for a Gly354Cys mutation in factor VII that results in severely impaired secretion of the molecule, but not complete deficiency.</title>
        <authorList>
            <person name="Takamiya O."/>
            <person name="Hino K."/>
        </authorList>
    </citation>
    <scope>VARIANT FA7D CYS-414</scope>
    <scope>CHARACTERIZATION OF VARIANT FA7D CYS-414</scope>
</reference>
<reference key="47">
    <citation type="journal article" date="2009" name="Clin. Chim. Acta">
        <title>Phenotypic and genotypic characterization of Factor VII deficiency patients from Western India.</title>
        <authorList>
            <person name="Mota L."/>
            <person name="Shetty S."/>
            <person name="Idicula-Thomas S."/>
            <person name="Ghosh K."/>
        </authorList>
    </citation>
    <scope>VARIANTS FA7D ARG-82; ARG-177; THR-198; GLN-212; PRO-251; ARG-323; ARG-344; PHE-370; MET-384; GLU-398 AND ARG-408</scope>
</reference>
<reference key="48">
    <citation type="journal article" date="2009" name="Haemophilia">
        <title>Factor VII deficiency: clinical manifestation of 717 subjects from Europe and Latin America with mutations in the factor 7 gene.</title>
        <authorList>
            <person name="Herrmann F.H."/>
            <person name="Wulff K."/>
            <person name="Auerswald G."/>
            <person name="Schulman S."/>
            <person name="Astermark J."/>
            <person name="Batorova A."/>
            <person name="Kreuz W."/>
            <person name="Pollmann H."/>
            <person name="Ruiz-Saez A."/>
            <person name="De Bosch N."/>
            <person name="Salazar-Sanchez L."/>
        </authorList>
    </citation>
    <scope>VARIANTS FA7D LEU-64; GLN-73; PHE-82; PHE-84 DEL; GLY-88; PRO-88; PRO-120; CYS-128; ASP-138; GLN-139; LYS-154; SER-156; SER-157; ARG-160; PHE-171; PRO-181; ASN-183; PHE-186; SER-189; LEU-194; THR-194; ARG-195; GLN-212; ASP-216; ASN-241; THR-251; ARG-254; TYR-254; PRO-264; THR-266; ASN-272; ASN-277; TRP-283; ILE-298; GLN-301; ASN-302; HIS-302; THR-304; VAL-304; CYS-307; HIS-307; MET-312; PHE-321; LYS-325; GLN-326; CYS-337; PHE-341; SER-343; SER-345; CYS-350; VAL-354; ILE-358; PRO-360; ARG-363; HIS-363; GLN-364; TRP-364; PHE-370; TRP-375; MET-384; THR-387; VAL-387; SER-388; CYS-391; SER-391; GLU-401; HIS-403; ASN-404; GLY-413; MET-419; PHE-422; ALA-425; CYS-425; THR-429; ASP-432; GLU-435 AND PHE-437</scope>
</reference>
<reference key="49">
    <citation type="journal article" date="2009" name="Haemophilia">
        <title>Familial factor VII deficiency with foetal and neonatal fatal cerebral haemorrhage associated with homozygosis to Gly180Arg mutation.</title>
        <authorList>
            <person name="Landau D."/>
            <person name="Rosenberg N."/>
            <person name="Zivelin A."/>
            <person name="Staretz-Chacham O."/>
            <person name="Kapelushnik J."/>
        </authorList>
    </citation>
    <scope>VARIANT FA7D ARG-240</scope>
</reference>
<reference key="50">
    <citation type="journal article" date="2011" name="Blood Coagul. Fibrinolysis">
        <title>Recurrent mutations and genotype-phenotype correlations in hereditary factor VII deficiency in Korea.</title>
        <authorList>
            <person name="Kwon M.J."/>
            <person name="Yoo K.Y."/>
            <person name="Lee K.O."/>
            <person name="Kim S.H."/>
            <person name="Kim H.J."/>
        </authorList>
    </citation>
    <scope>VARIANTS FA7D ARG-59 INS; VAL-314; SER-343 AND GLY-389</scope>
</reference>
<reference key="51">
    <citation type="journal article" date="2011" name="Blood Coagul. Fibrinolysis">
        <title>A novel missense mutation close to the charge-stabilizing system in a patient with congenital factor VII deficiency.</title>
        <authorList>
            <person name="Jiang M."/>
            <person name="Wang Z."/>
            <person name="Yu Z."/>
            <person name="Bai X."/>
            <person name="Su J."/>
            <person name="Cao L."/>
            <person name="Zhang W."/>
            <person name="Ruan C."/>
        </authorList>
    </citation>
    <scope>VARIANT FA7D PHE-250</scope>
</reference>
<reference key="52">
    <citation type="journal article" date="2016" name="Blood Coagul. Fibrinolysis">
        <title>Severe coagulation factor VII deficiency caused by a novel homozygous mutation (p. Trp284Gly) in loop 140s.</title>
        <authorList>
            <person name="Hao X."/>
            <person name="Cheng X."/>
            <person name="Ye J."/>
            <person name="Wang Y."/>
            <person name="Yang L."/>
            <person name="Wang M."/>
            <person name="Jin Y."/>
        </authorList>
    </citation>
    <scope>VARIANT FA7D GLY-344</scope>
</reference>
<reference key="53">
    <citation type="journal article" date="2023" name="Br. J. Haematol.">
        <title>Structural and functional characterization of novel F7 mutations identified in Chinese factor VII-deficient patients.</title>
        <authorList>
            <person name="Lou C."/>
            <person name="Jiang J."/>
            <person name="Chen W."/>
            <person name="Zhang Z."/>
            <person name="Xu G."/>
            <person name="Liu Y."/>
            <person name="Dai J."/>
            <person name="Ding Q."/>
            <person name="Wang X."/>
            <person name="Wei H."/>
            <person name="Wu Y."/>
            <person name="Xu Q."/>
            <person name="Wu W."/>
        </authorList>
    </citation>
    <scope>VARIANTS FA7D ASN-213; PHE-238; VAL-252; MET-336; GLY-342; ASP-420 AND SER-432</scope>
    <scope>CHARACTERIZATION OF VARIANTS FA7D ASN-213; PHE-238; VAL-252; MET-336; GLY-342; ASP-420 AND SER-432</scope>
    <scope>SUBCELLULAR LOCATION</scope>
</reference>
<evidence type="ECO:0000250" key="1"/>
<evidence type="ECO:0000255" key="2"/>
<evidence type="ECO:0000255" key="3">
    <source>
        <dbReference type="PROSITE-ProRule" id="PRU00076"/>
    </source>
</evidence>
<evidence type="ECO:0000255" key="4">
    <source>
        <dbReference type="PROSITE-ProRule" id="PRU00274"/>
    </source>
</evidence>
<evidence type="ECO:0000255" key="5">
    <source>
        <dbReference type="PROSITE-ProRule" id="PRU00463"/>
    </source>
</evidence>
<evidence type="ECO:0000269" key="6">
    <source>
    </source>
</evidence>
<evidence type="ECO:0000269" key="7">
    <source>
    </source>
</evidence>
<evidence type="ECO:0000269" key="8">
    <source>
    </source>
</evidence>
<evidence type="ECO:0000269" key="9">
    <source>
    </source>
</evidence>
<evidence type="ECO:0000269" key="10">
    <source>
    </source>
</evidence>
<evidence type="ECO:0000269" key="11">
    <source>
    </source>
</evidence>
<evidence type="ECO:0000269" key="12">
    <source>
    </source>
</evidence>
<evidence type="ECO:0000269" key="13">
    <source>
    </source>
</evidence>
<evidence type="ECO:0000269" key="14">
    <source>
    </source>
</evidence>
<evidence type="ECO:0000269" key="15">
    <source>
    </source>
</evidence>
<evidence type="ECO:0000269" key="16">
    <source>
    </source>
</evidence>
<evidence type="ECO:0000269" key="17">
    <source>
    </source>
</evidence>
<evidence type="ECO:0000269" key="18">
    <source>
    </source>
</evidence>
<evidence type="ECO:0000269" key="19">
    <source>
    </source>
</evidence>
<evidence type="ECO:0000269" key="20">
    <source>
    </source>
</evidence>
<evidence type="ECO:0000269" key="21">
    <source>
    </source>
</evidence>
<evidence type="ECO:0000269" key="22">
    <source>
    </source>
</evidence>
<evidence type="ECO:0000269" key="23">
    <source>
    </source>
</evidence>
<evidence type="ECO:0000269" key="24">
    <source>
    </source>
</evidence>
<evidence type="ECO:0000269" key="25">
    <source>
    </source>
</evidence>
<evidence type="ECO:0000269" key="26">
    <source>
    </source>
</evidence>
<evidence type="ECO:0000269" key="27">
    <source>
    </source>
</evidence>
<evidence type="ECO:0000269" key="28">
    <source>
    </source>
</evidence>
<evidence type="ECO:0000269" key="29">
    <source>
    </source>
</evidence>
<evidence type="ECO:0000269" key="30">
    <source>
    </source>
</evidence>
<evidence type="ECO:0000269" key="31">
    <source>
    </source>
</evidence>
<evidence type="ECO:0000269" key="32">
    <source>
    </source>
</evidence>
<evidence type="ECO:0000269" key="33">
    <source>
    </source>
</evidence>
<evidence type="ECO:0000269" key="34">
    <source>
    </source>
</evidence>
<evidence type="ECO:0000269" key="35">
    <source>
    </source>
</evidence>
<evidence type="ECO:0000269" key="36">
    <source>
    </source>
</evidence>
<evidence type="ECO:0000269" key="37">
    <source>
    </source>
</evidence>
<evidence type="ECO:0000269" key="38">
    <source>
    </source>
</evidence>
<evidence type="ECO:0000269" key="39">
    <source>
    </source>
</evidence>
<evidence type="ECO:0000269" key="40">
    <source>
    </source>
</evidence>
<evidence type="ECO:0000269" key="41">
    <source>
    </source>
</evidence>
<evidence type="ECO:0000269" key="42">
    <source>
    </source>
</evidence>
<evidence type="ECO:0000269" key="43">
    <source>
    </source>
</evidence>
<evidence type="ECO:0000269" key="44">
    <source>
    </source>
</evidence>
<evidence type="ECO:0000269" key="45">
    <source>
    </source>
</evidence>
<evidence type="ECO:0000269" key="46">
    <source>
    </source>
</evidence>
<evidence type="ECO:0000269" key="47">
    <source>
    </source>
</evidence>
<evidence type="ECO:0000269" key="48">
    <source>
    </source>
</evidence>
<evidence type="ECO:0000269" key="49">
    <source>
    </source>
</evidence>
<evidence type="ECO:0000269" key="50">
    <source ref="6"/>
</evidence>
<evidence type="ECO:0000303" key="51">
    <source>
    </source>
</evidence>
<evidence type="ECO:0000303" key="52">
    <source>
    </source>
</evidence>
<evidence type="ECO:0007829" key="53">
    <source>
        <dbReference type="PDB" id="1DVA"/>
    </source>
</evidence>
<evidence type="ECO:0007829" key="54">
    <source>
        <dbReference type="PDB" id="1JBU"/>
    </source>
</evidence>
<evidence type="ECO:0007829" key="55">
    <source>
        <dbReference type="PDB" id="1QFK"/>
    </source>
</evidence>
<evidence type="ECO:0007829" key="56">
    <source>
        <dbReference type="PDB" id="2C4F"/>
    </source>
</evidence>
<evidence type="ECO:0007829" key="57">
    <source>
        <dbReference type="PDB" id="2FLB"/>
    </source>
</evidence>
<evidence type="ECO:0007829" key="58">
    <source>
        <dbReference type="PDB" id="4YLQ"/>
    </source>
</evidence>
<evidence type="ECO:0007829" key="59">
    <source>
        <dbReference type="PDB" id="5PAG"/>
    </source>
</evidence>
<evidence type="ECO:0007829" key="60">
    <source>
        <dbReference type="PDB" id="5PAK"/>
    </source>
</evidence>
<evidence type="ECO:0007829" key="61">
    <source>
        <dbReference type="PDB" id="5PAX"/>
    </source>
</evidence>
<evidence type="ECO:0007829" key="62">
    <source>
        <dbReference type="PDB" id="8UUD"/>
    </source>
</evidence>
<feature type="signal peptide" evidence="2">
    <location>
        <begin position="1"/>
        <end position="20"/>
    </location>
</feature>
<feature type="propeptide" id="PRO_0000027729" evidence="28">
    <location>
        <begin position="21"/>
        <end position="60"/>
    </location>
</feature>
<feature type="chain" id="PRO_0000027730" description="Factor VII light chain">
    <location>
        <begin position="61"/>
        <end position="212"/>
    </location>
</feature>
<feature type="chain" id="PRO_0000027731" description="Factor VII heavy chain">
    <location>
        <begin position="213"/>
        <end position="466"/>
    </location>
</feature>
<feature type="domain" description="Gla" evidence="5">
    <location>
        <begin position="61"/>
        <end position="105"/>
    </location>
</feature>
<feature type="domain" description="EGF-like 1; calcium-binding" evidence="3">
    <location>
        <begin position="106"/>
        <end position="142"/>
    </location>
</feature>
<feature type="domain" description="EGF-like 2" evidence="3">
    <location>
        <begin position="147"/>
        <end position="188"/>
    </location>
</feature>
<feature type="domain" description="Peptidase S1" evidence="4">
    <location>
        <begin position="213"/>
        <end position="452"/>
    </location>
</feature>
<feature type="active site" description="Charge relay system" evidence="1">
    <location>
        <position position="253"/>
    </location>
</feature>
<feature type="active site" description="Charge relay system" evidence="1">
    <location>
        <position position="302"/>
    </location>
</feature>
<feature type="active site" description="Charge relay system" evidence="1">
    <location>
        <position position="404"/>
    </location>
</feature>
<feature type="binding site" evidence="1">
    <location>
        <position position="398"/>
    </location>
    <ligand>
        <name>substrate</name>
    </ligand>
</feature>
<feature type="site" description="Important for S-112 for O-xylosylation">
    <location>
        <position position="113"/>
    </location>
</feature>
<feature type="site" description="Cleavage; by factor Xa, factor XIIa, factor IXa, or thrombin">
    <location>
        <begin position="212"/>
        <end position="213"/>
    </location>
</feature>
<feature type="modified residue" description="4-carboxyglutamate" evidence="5 28 30">
    <location>
        <position position="66"/>
    </location>
</feature>
<feature type="modified residue" description="4-carboxyglutamate" evidence="5 28 30">
    <location>
        <position position="67"/>
    </location>
</feature>
<feature type="modified residue" description="4-carboxyglutamate" evidence="5 28 30">
    <location>
        <position position="74"/>
    </location>
</feature>
<feature type="modified residue" description="4-carboxyglutamate" evidence="5 28 30">
    <location>
        <position position="76"/>
    </location>
</feature>
<feature type="modified residue" description="4-carboxyglutamate" evidence="5 28">
    <location>
        <position position="79"/>
    </location>
</feature>
<feature type="modified residue" description="4-carboxyglutamate" evidence="5 28 30">
    <location>
        <position position="80"/>
    </location>
</feature>
<feature type="modified residue" description="4-carboxyglutamate" evidence="5 28 30">
    <location>
        <position position="85"/>
    </location>
</feature>
<feature type="modified residue" description="4-carboxyglutamate" evidence="5 28 30">
    <location>
        <position position="86"/>
    </location>
</feature>
<feature type="modified residue" description="4-carboxyglutamate" evidence="5 28 30">
    <location>
        <position position="89"/>
    </location>
</feature>
<feature type="modified residue" description="4-carboxyglutamate" evidence="5 28 30">
    <location>
        <position position="95"/>
    </location>
</feature>
<feature type="modified residue" description="(3R)-3-hydroxyaspartate" evidence="28">
    <location>
        <position position="123"/>
    </location>
</feature>
<feature type="glycosylation site" id="CAR_000007" description="O-linked (Glc...) serine; alternate" evidence="16 22 24 25">
    <location>
        <position position="112"/>
    </location>
</feature>
<feature type="glycosylation site" description="O-linked (Xyl...) serine; alternate" evidence="16 22 24 25">
    <location>
        <position position="112"/>
    </location>
</feature>
<feature type="glycosylation site" id="CAR_000180" description="O-linked (Fuc) serine" evidence="16 45">
    <location>
        <position position="120"/>
    </location>
</feature>
<feature type="glycosylation site" description="N-linked (GlcNAc...) asparagine" evidence="17 28">
    <location>
        <position position="205"/>
    </location>
</feature>
<feature type="glycosylation site" description="N-linked (GlcNAc...) asparagine" evidence="17 28">
    <location>
        <position position="382"/>
    </location>
</feature>
<feature type="disulfide bond">
    <location>
        <begin position="77"/>
        <end position="82"/>
    </location>
</feature>
<feature type="disulfide bond">
    <location>
        <begin position="110"/>
        <end position="121"/>
    </location>
</feature>
<feature type="disulfide bond">
    <location>
        <begin position="115"/>
        <end position="130"/>
    </location>
</feature>
<feature type="disulfide bond">
    <location>
        <begin position="132"/>
        <end position="141"/>
    </location>
</feature>
<feature type="disulfide bond">
    <location>
        <begin position="151"/>
        <end position="162"/>
    </location>
</feature>
<feature type="disulfide bond">
    <location>
        <begin position="158"/>
        <end position="172"/>
    </location>
</feature>
<feature type="disulfide bond">
    <location>
        <begin position="174"/>
        <end position="187"/>
    </location>
</feature>
<feature type="disulfide bond">
    <location>
        <begin position="195"/>
        <end position="322"/>
    </location>
</feature>
<feature type="disulfide bond">
    <location>
        <begin position="219"/>
        <end position="224"/>
    </location>
</feature>
<feature type="disulfide bond">
    <location>
        <begin position="238"/>
        <end position="254"/>
    </location>
</feature>
<feature type="disulfide bond">
    <location>
        <begin position="370"/>
        <end position="389"/>
    </location>
</feature>
<feature type="disulfide bond">
    <location>
        <begin position="400"/>
        <end position="428"/>
    </location>
</feature>
<feature type="splice variant" id="VSP_005387" description="In isoform B." evidence="51 52">
    <location>
        <begin position="22"/>
        <end position="43"/>
    </location>
</feature>
<feature type="sequence variant" id="VAR_014391" description="In FA7D; Morioka; dbSNP:rs387906507." evidence="48">
    <original>L</original>
    <variation>P</variation>
    <location>
        <position position="13"/>
    </location>
</feature>
<feature type="sequence variant" id="VAR_065369" description="In FA7D." evidence="21">
    <original>R</original>
    <variation>RR</variation>
    <location>
        <position position="59"/>
    </location>
</feature>
<feature type="sequence variant" id="VAR_015135" description="In FA7D." evidence="7 15">
    <original>F</original>
    <variation>L</variation>
    <location>
        <position position="64"/>
    </location>
</feature>
<feature type="sequence variant" id="VAR_014405" description="In FA7D; dbSNP:rs45572939." evidence="10 15">
    <original>L</original>
    <variation>Q</variation>
    <location>
        <position position="73"/>
    </location>
</feature>
<feature type="sequence variant" id="VAR_014406" description="In FA7D." evidence="10">
    <original>E</original>
    <variation>Q</variation>
    <location>
        <position position="79"/>
    </location>
</feature>
<feature type="sequence variant" id="VAR_065370" description="In FA7D; dbSNP:rs1448296564." evidence="15">
    <original>C</original>
    <variation>F</variation>
    <location>
        <position position="82"/>
    </location>
</feature>
<feature type="sequence variant" id="VAR_065371" description="In FA7D; dbSNP:rs745374448." evidence="19">
    <original>C</original>
    <variation>R</variation>
    <location>
        <position position="82"/>
    </location>
</feature>
<feature type="sequence variant" id="VAR_065372" description="In FA7D." evidence="15">
    <location>
        <position position="84"/>
    </location>
</feature>
<feature type="sequence variant" id="VAR_065373" description="In FA7D; dbSNP:rs121964935." evidence="11">
    <original>E</original>
    <variation>K</variation>
    <location>
        <position position="85"/>
    </location>
</feature>
<feature type="sequence variant" id="VAR_065374" description="In FA7D; dbSNP:rs776354144." evidence="15">
    <original>R</original>
    <variation>G</variation>
    <location>
        <position position="88"/>
    </location>
</feature>
<feature type="sequence variant" id="VAR_065375" description="In FA7D." evidence="15">
    <original>R</original>
    <variation>P</variation>
    <location>
        <position position="88"/>
    </location>
</feature>
<feature type="sequence variant" id="VAR_065376" description="In FA7D; exhibits no procoagulant activity and is unable to bind tissue factor; dbSNP:rs121964932." evidence="46">
    <original>N</original>
    <variation>D</variation>
    <location>
        <position position="117"/>
    </location>
</feature>
<feature type="sequence variant" id="VAR_015136" description="In FA7D." evidence="7 15">
    <original>S</original>
    <variation>P</variation>
    <location>
        <position position="120"/>
    </location>
</feature>
<feature type="sequence variant" id="VAR_014407" description="In FA7D." evidence="10">
    <original>C</original>
    <variation>F</variation>
    <location>
        <position position="121"/>
    </location>
</feature>
<feature type="sequence variant" id="VAR_014408" description="In FA7D." evidence="10">
    <original>L</original>
    <variation>P</variation>
    <location>
        <position position="125"/>
    </location>
</feature>
<feature type="sequence variant" id="VAR_014409" description="In FA7D." evidence="7 10 15">
    <original>Y</original>
    <variation>C</variation>
    <location>
        <position position="128"/>
    </location>
</feature>
<feature type="sequence variant" id="VAR_065377" description="In FA7D." evidence="15">
    <original>G</original>
    <variation>D</variation>
    <location>
        <position position="138"/>
    </location>
</feature>
<feature type="sequence variant" id="VAR_006497" description="In FA7D.">
    <original>R</original>
    <variation>K</variation>
    <location>
        <position position="139"/>
    </location>
</feature>
<feature type="sequence variant" id="VAR_006498" description="In FA7D; Charlotte; dbSNP:rs150525536." evidence="15 36 37">
    <original>R</original>
    <variation>Q</variation>
    <location>
        <position position="139"/>
    </location>
</feature>
<feature type="sequence variant" id="VAR_006499" description="In FA7D; dbSNP:rs776796178." evidence="10 37">
    <original>R</original>
    <variation>W</variation>
    <location>
        <position position="139"/>
    </location>
</feature>
<feature type="sequence variant" id="VAR_014410" description="In FA7D." evidence="10">
    <original>C</original>
    <variation>S</variation>
    <location>
        <position position="151"/>
    </location>
</feature>
<feature type="sequence variant" id="VAR_015137" description="In FA7D; dbSNP:rs146795869." evidence="7 15">
    <original>E</original>
    <variation>K</variation>
    <location>
        <position position="154"/>
    </location>
</feature>
<feature type="sequence variant" id="VAR_065378" description="In FA7D; dbSNP:rs563972504." evidence="15">
    <original>G</original>
    <variation>S</variation>
    <location>
        <position position="156"/>
    </location>
</feature>
<feature type="sequence variant" id="VAR_006501" description="In FA7D." evidence="38">
    <original>G</original>
    <variation>C</variation>
    <location>
        <position position="157"/>
    </location>
</feature>
<feature type="sequence variant" id="VAR_006500" description="In FA7D; dbSNP:rs763458490." evidence="7 15">
    <original>G</original>
    <variation>S</variation>
    <location>
        <position position="157"/>
    </location>
</feature>
<feature type="sequence variant" id="VAR_014411" description="In FA7D; dbSNP:rs771335282." evidence="10">
    <original>G</original>
    <variation>V</variation>
    <location>
        <position position="157"/>
    </location>
</feature>
<feature type="sequence variant" id="VAR_006502" description="In FA7D; dbSNP:rs200016360." evidence="7 10 15 37">
    <original>Q</original>
    <variation>R</variation>
    <location>
        <position position="160"/>
    </location>
</feature>
<feature type="sequence variant" id="VAR_065379" description="In FA7D; dbSNP:rs143855920." evidence="15">
    <original>S</original>
    <variation>F</variation>
    <location>
        <position position="171"/>
    </location>
</feature>
<feature type="sequence variant" id="VAR_065380" description="In FA7D." evidence="19">
    <original>G</original>
    <variation>R</variation>
    <location>
        <position position="177"/>
    </location>
</feature>
<feature type="sequence variant" id="VAR_065381" description="In FA7D." evidence="15">
    <original>L</original>
    <variation>P</variation>
    <location>
        <position position="181"/>
    </location>
</feature>
<feature type="sequence variant" id="VAR_065382" description="In FA7D; dbSNP:rs1258691292." evidence="15">
    <original>D</original>
    <variation>N</variation>
    <location>
        <position position="183"/>
    </location>
</feature>
<feature type="sequence variant" id="VAR_065383" description="In FA7D; dbSNP:rs764971156." evidence="15">
    <original>S</original>
    <variation>F</variation>
    <location>
        <position position="186"/>
    </location>
</feature>
<feature type="sequence variant" id="VAR_065384" description="In FA7D; dbSNP:rs1479693459." evidence="15">
    <original>P</original>
    <variation>S</variation>
    <location>
        <position position="189"/>
    </location>
</feature>
<feature type="sequence variant" id="VAR_065385" description="In FA7D." evidence="15">
    <original>P</original>
    <variation>L</variation>
    <location>
        <position position="194"/>
    </location>
</feature>
<feature type="sequence variant" id="VAR_006503" description="In FA7D; Malta-I; dbSNP:rs1234759020." evidence="15 47">
    <original>P</original>
    <variation>T</variation>
    <location>
        <position position="194"/>
    </location>
</feature>
<feature type="sequence variant" id="VAR_014412" description="In FA7D; dbSNP:rs372577568." evidence="7 10 15">
    <original>C</original>
    <variation>R</variation>
    <location>
        <position position="195"/>
    </location>
</feature>
<feature type="sequence variant" id="VAR_006504" description="In FA7D; dbSNP:rs1250204261." evidence="37">
    <original>K</original>
    <variation>E</variation>
    <location>
        <position position="197"/>
    </location>
</feature>
<feature type="sequence variant" id="VAR_065386" description="In FA7D; dbSNP:rs762621913." evidence="19">
    <original>I</original>
    <variation>T</variation>
    <location>
        <position position="198"/>
    </location>
</feature>
<feature type="sequence variant" id="VAR_006505" description="In FA7D; Charlotte; dbSNP:rs868044209." evidence="7 15 19 36">
    <original>R</original>
    <variation>Q</variation>
    <location>
        <position position="212"/>
    </location>
</feature>
<feature type="sequence variant" id="VAR_089951" description="In FA7D; results in severely decreased clot formation in coagulation assays." evidence="31">
    <original>I</original>
    <variation>N</variation>
    <location>
        <position position="213"/>
    </location>
</feature>
<feature type="sequence variant" id="VAR_015138" description="In FA7D; dbSNP:rs1438503836." evidence="7 15">
    <original>G</original>
    <variation>D</variation>
    <location>
        <position position="216"/>
    </location>
</feature>
<feature type="sequence variant" id="VAR_089952" description="In FA7D; results in loss of function and lack of clot formation in coagulation assays." evidence="31">
    <original>C</original>
    <variation>F</variation>
    <location>
        <position position="238"/>
    </location>
</feature>
<feature type="sequence variant" id="VAR_006506" description="In FA7D; dbSNP:rs121964928." evidence="39">
    <original>C</original>
    <variation>Y</variation>
    <location>
        <position position="238"/>
    </location>
</feature>
<feature type="sequence variant" id="VAR_065387" description="In FA7D; dbSNP:rs2036214367." evidence="18">
    <original>G</original>
    <variation>R</variation>
    <location>
        <position position="240"/>
    </location>
</feature>
<feature type="sequence variant" id="VAR_014413" description="In FA7D; dbSNP:rs1160146175." evidence="10 15">
    <original>T</original>
    <variation>N</variation>
    <location>
        <position position="241"/>
    </location>
</feature>
<feature type="sequence variant" id="VAR_065388" description="In FA7D." evidence="23">
    <original>S</original>
    <variation>F</variation>
    <location>
        <position position="250"/>
    </location>
</feature>
<feature type="sequence variant" id="VAR_065389" description="In FA7D." evidence="19">
    <original>A</original>
    <variation>P</variation>
    <location>
        <position position="251"/>
    </location>
</feature>
<feature type="sequence variant" id="VAR_065390" description="In FA7D; dbSNP:rs1269916662." evidence="15">
    <original>A</original>
    <variation>T</variation>
    <location>
        <position position="251"/>
    </location>
</feature>
<feature type="sequence variant" id="VAR_089953" description="In FA7D; results in loss of function and lack of clot formation in coagulation assays." evidence="31">
    <original>A</original>
    <variation>V</variation>
    <location>
        <position position="252"/>
    </location>
</feature>
<feature type="sequence variant" id="VAR_065391" description="In FA7D." evidence="15">
    <original>C</original>
    <variation>R</variation>
    <location>
        <position position="254"/>
    </location>
</feature>
<feature type="sequence variant" id="VAR_015139" description="In FA7D." evidence="7 15">
    <original>C</original>
    <variation>Y</variation>
    <location>
        <position position="254"/>
    </location>
</feature>
<feature type="sequence variant" id="VAR_065392" description="In FA7D; dbSNP:rs753266903." evidence="15">
    <original>L</original>
    <variation>P</variation>
    <location>
        <position position="264"/>
    </location>
</feature>
<feature type="sequence variant" id="VAR_015140" description="In FA7D; dbSNP:rs764807079." evidence="7 15">
    <original>A</original>
    <variation>T</variation>
    <location>
        <position position="266"/>
    </location>
</feature>
<feature type="sequence variant" id="VAR_065393" description="In FA7D; dbSNP:rs751028917." evidence="15">
    <original>D</original>
    <variation>N</variation>
    <location>
        <position position="272"/>
    </location>
</feature>
<feature type="sequence variant" id="VAR_065394" description="In FA7D; dbSNP:rs550074221." evidence="15">
    <original>D</original>
    <variation>N</variation>
    <location>
        <position position="277"/>
    </location>
</feature>
<feature type="sequence variant" id="VAR_006507" description="In FA7D; dbSNP:rs779589651." evidence="15 42">
    <original>R</original>
    <variation>W</variation>
    <location>
        <position position="283"/>
    </location>
</feature>
<feature type="sequence variant" id="VAR_013936" description="In dbSNP:rs6045." evidence="6">
    <original>V</original>
    <variation>D</variation>
    <location>
        <position position="295"/>
    </location>
</feature>
<feature type="sequence variant" id="VAR_065395" description="In FA7D." evidence="15">
    <original>T</original>
    <variation>I</variation>
    <location>
        <position position="298"/>
    </location>
</feature>
<feature type="sequence variant" id="VAR_065396" description="In FA7D." evidence="15">
    <original>H</original>
    <variation>Q</variation>
    <location>
        <position position="301"/>
    </location>
</feature>
<feature type="sequence variant" id="VAR_014414" description="In FA7D." evidence="7 10 15">
    <original>D</original>
    <variation>H</variation>
    <location>
        <position position="302"/>
    </location>
</feature>
<feature type="sequence variant" id="VAR_014415" description="In FA7D; dbSNP:rs770328850." evidence="10 15">
    <original>D</original>
    <variation>N</variation>
    <location>
        <position position="302"/>
    </location>
</feature>
<feature type="sequence variant" id="VAR_014416" description="In FA7D; dbSNP:rs773627551." evidence="10 15">
    <original>A</original>
    <variation>T</variation>
    <location>
        <position position="304"/>
    </location>
</feature>
<feature type="sequence variant" id="VAR_006508" description="In FA7D; Malta-II; dbSNP:rs121964931." evidence="7 10 15 43 47">
    <original>A</original>
    <variation>V</variation>
    <location>
        <position position="304"/>
    </location>
</feature>
<feature type="sequence variant" id="VAR_014417" description="In FA7D; dbSNP:rs147680958." evidence="7 10 15">
    <original>R</original>
    <variation>C</variation>
    <location>
        <position position="307"/>
    </location>
</feature>
<feature type="sequence variant" id="VAR_006509" description="In FA7D; Mie; dbSNP:rs121964929." evidence="15 33">
    <original>R</original>
    <variation>H</variation>
    <location>
        <position position="307"/>
    </location>
</feature>
<feature type="sequence variant" id="VAR_015141" description="In FA7D; dbSNP:rs201991361." evidence="7 15">
    <original>V</original>
    <variation>M</variation>
    <location>
        <position position="312"/>
    </location>
</feature>
<feature type="sequence variant" id="VAR_065397" description="In FA7D." evidence="21">
    <original>L</original>
    <variation>V</variation>
    <location>
        <position position="314"/>
    </location>
</feature>
<feature type="sequence variant" id="VAR_065398" description="In FA7D; dbSNP:rs778138366." evidence="15">
    <original>L</original>
    <variation>F</variation>
    <location>
        <position position="321"/>
    </location>
</feature>
<feature type="sequence variant" id="VAR_065399" description="In FA7D." evidence="19">
    <original>L</original>
    <variation>R</variation>
    <location>
        <position position="323"/>
    </location>
</feature>
<feature type="sequence variant" id="VAR_006510" description="In FA7D; dbSNP:rs749760143." evidence="7 15 42">
    <original>E</original>
    <variation>K</variation>
    <location>
        <position position="325"/>
    </location>
</feature>
<feature type="sequence variant" id="VAR_065400" description="In FA7D; dbSNP:rs146698837." evidence="15">
    <original>R</original>
    <variation>Q</variation>
    <location>
        <position position="326"/>
    </location>
</feature>
<feature type="sequence variant" id="VAR_014418" description="In FA7D; dbSNP:rs200212201." evidence="10">
    <original>T</original>
    <variation>M</variation>
    <location>
        <position position="332"/>
    </location>
</feature>
<feature type="sequence variant" id="VAR_089954" description="In FA7D; uncertain significance; results in decreased clot formation in coagulation assays; dbSNP:rs374305125." evidence="31">
    <original>V</original>
    <variation>M</variation>
    <location>
        <position position="336"/>
    </location>
</feature>
<feature type="sequence variant" id="VAR_065401" description="In FA7D; dbSNP:rs139372641." evidence="15">
    <original>R</original>
    <variation>C</variation>
    <location>
        <position position="337"/>
    </location>
</feature>
<feature type="sequence variant" id="VAR_015142" description="In FA7D." evidence="7 15">
    <original>V</original>
    <variation>F</variation>
    <location>
        <position position="341"/>
    </location>
</feature>
<feature type="sequence variant" id="VAR_089955" description="In FA7D; results in severely decreased clot formation in coagulation assays." evidence="31">
    <original>S</original>
    <variation>G</variation>
    <location>
        <position position="342"/>
    </location>
</feature>
<feature type="sequence variant" id="VAR_065402" description="In FA7D; dbSNP:rs1250853566." evidence="15 21">
    <original>G</original>
    <variation>S</variation>
    <location>
        <position position="343"/>
    </location>
</feature>
<feature type="sequence variant" id="VAR_076570" description="In FA7D." evidence="26">
    <original>W</original>
    <variation>G</variation>
    <location>
        <position position="344"/>
    </location>
</feature>
<feature type="sequence variant" id="VAR_065403" description="In FA7D." evidence="19">
    <original>W</original>
    <variation>R</variation>
    <location>
        <position position="344"/>
    </location>
</feature>
<feature type="sequence variant" id="VAR_065404" description="In FA7D; dbSNP:rs2036242082." evidence="15">
    <original>G</original>
    <variation>S</variation>
    <location>
        <position position="345"/>
    </location>
</feature>
<feature type="sequence variant" id="VAR_065405" description="In FA7D; dbSNP:rs747876824." evidence="15">
    <original>R</original>
    <variation>C</variation>
    <location>
        <position position="350"/>
    </location>
</feature>
<feature type="sequence variant" id="VAR_013122" description="In dbSNP:rs3093267." evidence="50">
    <original>A</original>
    <variation>T</variation>
    <location>
        <position position="352"/>
    </location>
</feature>
<feature type="sequence variant" id="VAR_006511" description="In FA7D; dbSNP:rs36209567." evidence="7 10 13 15 34">
    <original>A</original>
    <variation>V</variation>
    <location>
        <position position="354"/>
    </location>
</feature>
<feature type="sequence variant" id="VAR_006512" description="In FA7D; dbSNP:rs149283257." evidence="7 10 15 35">
    <original>M</original>
    <variation>I</variation>
    <location>
        <position position="358"/>
    </location>
</feature>
<feature type="sequence variant" id="VAR_006513" description="In FA7D; dbSNP:rs928183869." evidence="42">
    <original>M</original>
    <variation>V</variation>
    <location>
        <position position="358"/>
    </location>
</feature>
<feature type="sequence variant" id="VAR_065406" description="In FA7D." evidence="15">
    <original>L</original>
    <variation>P</variation>
    <location>
        <position position="360"/>
    </location>
</feature>
<feature type="sequence variant" id="VAR_065407" description="In FA7D." evidence="15">
    <original>P</original>
    <variation>H</variation>
    <location>
        <position position="363"/>
    </location>
</feature>
<feature type="sequence variant" id="VAR_015143" description="In FA7D; dbSNP:rs963430078." evidence="7 15">
    <original>P</original>
    <variation>R</variation>
    <location>
        <position position="363"/>
    </location>
</feature>
<feature type="sequence variant" id="VAR_006514" description="In FA7D; Harrow/Padua; dbSNP:rs121964926." evidence="14 15 20 35 37 42">
    <original>R</original>
    <variation>Q</variation>
    <location>
        <position position="364"/>
    </location>
</feature>
<feature type="sequence variant" id="VAR_065408" description="In FA7D; dbSNP:rs750980786." evidence="15">
    <original>R</original>
    <variation>W</variation>
    <location>
        <position position="364"/>
    </location>
</feature>
<feature type="sequence variant" id="VAR_018671" description="In dbSNP:rs747673406." evidence="32">
    <original>T</original>
    <variation>S</variation>
    <location>
        <position position="367"/>
    </location>
</feature>
<feature type="sequence variant" id="VAR_006515" description="In FA7D; dbSNP:rs121964927." evidence="7 10 14 15 19 35">
    <original>C</original>
    <variation>F</variation>
    <location>
        <position position="370"/>
    </location>
</feature>
<feature type="sequence variant" id="VAR_065409" description="In FA7D; dbSNP:rs137919286." evidence="15">
    <original>R</original>
    <variation>W</variation>
    <location>
        <position position="375"/>
    </location>
</feature>
<feature type="sequence variant" id="VAR_065410" description="In FA7D; dbSNP:rs531225271." evidence="15 19">
    <original>T</original>
    <variation>M</variation>
    <location>
        <position position="384"/>
    </location>
</feature>
<feature type="sequence variant" id="VAR_065411" description="In FA7D; dbSNP:rs1595080725." evidence="15">
    <original>M</original>
    <variation>T</variation>
    <location>
        <position position="387"/>
    </location>
</feature>
<feature type="sequence variant" id="VAR_065412" description="In FA7D; dbSNP:rs1215224419." evidence="15">
    <original>M</original>
    <variation>V</variation>
    <location>
        <position position="387"/>
    </location>
</feature>
<feature type="sequence variant" id="VAR_065413" description="In FA7D; reduces tissue factor binding; impairs activation by factor Xa; abolishes amidolytic and coagulant activities; dbSNP:rs121964938." evidence="15 44">
    <original>F</original>
    <variation>S</variation>
    <location>
        <position position="388"/>
    </location>
</feature>
<feature type="sequence variant" id="VAR_014392" description="In FA7D; dbSNP:rs121964934." evidence="9 10 21">
    <original>C</original>
    <variation>G</variation>
    <location>
        <position position="389"/>
    </location>
</feature>
<feature type="sequence variant" id="VAR_065414" description="In FA7D." evidence="15">
    <original>G</original>
    <variation>C</variation>
    <location>
        <position position="391"/>
    </location>
</feature>
<feature type="sequence variant" id="VAR_014419" description="In FA7D; dbSNP:rs190485816." evidence="10 15">
    <original>G</original>
    <variation>S</variation>
    <location>
        <position position="391"/>
    </location>
</feature>
<feature type="sequence variant" id="VAR_065415" description="In FA7D." evidence="19">
    <original>D</original>
    <variation>E</variation>
    <location>
        <position position="398"/>
    </location>
</feature>
<feature type="sequence variant" id="VAR_065416" description="In FA7D; dbSNP:rs748979195." evidence="15">
    <original>K</original>
    <variation>E</variation>
    <location>
        <position position="401"/>
    </location>
</feature>
<feature type="sequence variant" id="VAR_006517" description="In FA7D." evidence="42">
    <original>G</original>
    <variation>E</variation>
    <location>
        <position position="402"/>
    </location>
</feature>
<feature type="sequence variant" id="VAR_006516" description="In FA7D; dbSNP:rs2142234194." evidence="35">
    <original>G</original>
    <variation>R</variation>
    <location>
        <position position="402"/>
    </location>
</feature>
<feature type="sequence variant" id="VAR_015144" description="In FA7D." evidence="7 15">
    <original>D</original>
    <variation>H</variation>
    <location>
        <position position="403"/>
    </location>
</feature>
<feature type="sequence variant" id="VAR_065417" description="In FA7D." evidence="15">
    <original>S</original>
    <variation>N</variation>
    <location>
        <position position="404"/>
    </location>
</feature>
<feature type="sequence variant" id="VAR_065418" description="In FA7D; dbSNP:rs121964936." evidence="11">
    <original>H</original>
    <variation>Q</variation>
    <location>
        <position position="408"/>
    </location>
</feature>
<feature type="sequence variant" id="VAR_065419" description="In FA7D; dbSNP:rs1566910847." evidence="19">
    <original>H</original>
    <variation>R</variation>
    <location>
        <position position="408"/>
    </location>
</feature>
<feature type="sequence variant" id="VAR_065420" description="In FA7D." evidence="15">
    <original>R</original>
    <variation>G</variation>
    <location>
        <position position="413"/>
    </location>
</feature>
<feature type="sequence variant" id="VAR_006518" description="May be associated with decreased susceptibility to myocardial infarction; dbSNP:rs6046." evidence="6 8 13 35 42 50">
    <original>R</original>
    <variation>Q</variation>
    <location>
        <position position="413"/>
    </location>
</feature>
<feature type="sequence variant" id="VAR_065421" description="In FA7D; results in severely impaired protein secretion; dbSNP:rs121964937." evidence="12">
    <original>G</original>
    <variation>C</variation>
    <location>
        <position position="414"/>
    </location>
</feature>
<feature type="sequence variant" id="VAR_006519" description="In FA7D; dbSNP:rs121964930." evidence="7 15 41">
    <original>T</original>
    <variation>M</variation>
    <location>
        <position position="419"/>
    </location>
</feature>
<feature type="sequence variant" id="VAR_089956" description="In FA7D; results in loss of function and lack of clot formation in coagulation assays." evidence="31">
    <original>G</original>
    <variation>D</variation>
    <location>
        <position position="420"/>
    </location>
</feature>
<feature type="sequence variant" id="VAR_065422" description="In FA7D." evidence="15">
    <original>V</original>
    <variation>F</variation>
    <location>
        <position position="422"/>
    </location>
</feature>
<feature type="sequence variant" id="VAR_065423" description="In FA7D." evidence="15">
    <original>G</original>
    <variation>A</variation>
    <location>
        <position position="425"/>
    </location>
</feature>
<feature type="sequence variant" id="VAR_065424" description="In FA7D; dbSNP:rs2036249208." evidence="15">
    <original>G</original>
    <variation>C</variation>
    <location>
        <position position="425"/>
    </location>
</feature>
<feature type="sequence variant" id="VAR_065425" description="In FA7D; dbSNP:rs755377592." evidence="15">
    <original>A</original>
    <variation>T</variation>
    <location>
        <position position="429"/>
    </location>
</feature>
<feature type="sequence variant" id="VAR_065426" description="In FA7D; dbSNP:rs1450120320." evidence="15">
    <original>G</original>
    <variation>D</variation>
    <location>
        <position position="432"/>
    </location>
</feature>
<feature type="sequence variant" id="VAR_089957" description="In FA7D; results in severely decreased clot formation in coagulation assays; dbSNP:rs1317151633." evidence="31">
    <original>G</original>
    <variation>S</variation>
    <location>
        <position position="432"/>
    </location>
</feature>
<feature type="sequence variant" id="VAR_014420" description="In FA7D; dbSNP:rs756956471." evidence="10 15">
    <original>G</original>
    <variation>E</variation>
    <location>
        <position position="435"/>
    </location>
</feature>
<feature type="sequence variant" id="VAR_065427" description="In FA7D; dbSNP:rs758213652." evidence="15">
    <original>Y</original>
    <variation>F</variation>
    <location>
        <position position="437"/>
    </location>
</feature>
<feature type="sequence variant" id="VAR_013123" description="In dbSNP:rs3093248." evidence="50">
    <original>E</original>
    <variation>K</variation>
    <location>
        <position position="445"/>
    </location>
</feature>
<feature type="mutagenesis site" description="Complete loss of O-glycosylation and O-xylosylation by POGLUT1." evidence="24">
    <original>S</original>
    <variation>A</variation>
    <location>
        <position position="112"/>
    </location>
</feature>
<feature type="mutagenesis site" description="No effect on O-glycosylation by POGLUT1. Drastic decrease in O-xylosylation." evidence="24">
    <original>S</original>
    <variation>A</variation>
    <location>
        <position position="113"/>
    </location>
</feature>
<feature type="helix" evidence="58">
    <location>
        <begin position="66"/>
        <end position="68"/>
    </location>
</feature>
<feature type="helix" evidence="58">
    <location>
        <begin position="73"/>
        <end position="77"/>
    </location>
</feature>
<feature type="strand" evidence="62">
    <location>
        <begin position="78"/>
        <end position="80"/>
    </location>
</feature>
<feature type="helix" evidence="58">
    <location>
        <begin position="84"/>
        <end position="91"/>
    </location>
</feature>
<feature type="helix" evidence="58">
    <location>
        <begin position="94"/>
        <end position="104"/>
    </location>
</feature>
<feature type="turn" evidence="58">
    <location>
        <begin position="109"/>
        <end position="112"/>
    </location>
</feature>
<feature type="turn" evidence="55">
    <location>
        <begin position="116"/>
        <end position="118"/>
    </location>
</feature>
<feature type="strand" evidence="58">
    <location>
        <begin position="120"/>
        <end position="124"/>
    </location>
</feature>
<feature type="strand" evidence="58">
    <location>
        <begin position="127"/>
        <end position="131"/>
    </location>
</feature>
<feature type="strand" evidence="58">
    <location>
        <begin position="136"/>
        <end position="138"/>
    </location>
</feature>
<feature type="helix" evidence="56">
    <location>
        <begin position="145"/>
        <end position="147"/>
    </location>
</feature>
<feature type="strand" evidence="55">
    <location>
        <begin position="148"/>
        <end position="150"/>
    </location>
</feature>
<feature type="turn" evidence="58">
    <location>
        <begin position="151"/>
        <end position="153"/>
    </location>
</feature>
<feature type="helix" evidence="59">
    <location>
        <begin position="154"/>
        <end position="157"/>
    </location>
</feature>
<feature type="strand" evidence="59">
    <location>
        <begin position="159"/>
        <end position="165"/>
    </location>
</feature>
<feature type="turn" evidence="59">
    <location>
        <begin position="166"/>
        <end position="168"/>
    </location>
</feature>
<feature type="strand" evidence="59">
    <location>
        <begin position="169"/>
        <end position="173"/>
    </location>
</feature>
<feature type="strand" evidence="59">
    <location>
        <begin position="178"/>
        <end position="180"/>
    </location>
</feature>
<feature type="strand" evidence="59">
    <location>
        <begin position="187"/>
        <end position="189"/>
    </location>
</feature>
<feature type="strand" evidence="59">
    <location>
        <begin position="191"/>
        <end position="193"/>
    </location>
</feature>
<feature type="helix" evidence="59">
    <location>
        <begin position="199"/>
        <end position="205"/>
    </location>
</feature>
<feature type="helix" evidence="54">
    <location>
        <begin position="220"/>
        <end position="222"/>
    </location>
</feature>
<feature type="strand" evidence="59">
    <location>
        <begin position="227"/>
        <end position="232"/>
    </location>
</feature>
<feature type="strand" evidence="59">
    <location>
        <begin position="235"/>
        <end position="242"/>
    </location>
</feature>
<feature type="strand" evidence="59">
    <location>
        <begin position="244"/>
        <end position="250"/>
    </location>
</feature>
<feature type="helix" evidence="59">
    <location>
        <begin position="252"/>
        <end position="255"/>
    </location>
</feature>
<feature type="helix" evidence="59">
    <location>
        <begin position="261"/>
        <end position="263"/>
    </location>
</feature>
<feature type="strand" evidence="59">
    <location>
        <begin position="264"/>
        <end position="269"/>
    </location>
</feature>
<feature type="strand" evidence="57">
    <location>
        <begin position="272"/>
        <end position="274"/>
    </location>
</feature>
<feature type="strand" evidence="59">
    <location>
        <begin position="281"/>
        <end position="291"/>
    </location>
</feature>
<feature type="strand" evidence="54">
    <location>
        <begin position="298"/>
        <end position="301"/>
    </location>
</feature>
<feature type="strand" evidence="59">
    <location>
        <begin position="304"/>
        <end position="310"/>
    </location>
</feature>
<feature type="helix" evidence="59">
    <location>
        <begin position="326"/>
        <end position="331"/>
    </location>
</feature>
<feature type="helix" evidence="59">
    <location>
        <begin position="333"/>
        <end position="335"/>
    </location>
</feature>
<feature type="strand" evidence="59">
    <location>
        <begin position="338"/>
        <end position="344"/>
    </location>
</feature>
<feature type="strand" evidence="59">
    <location>
        <begin position="346"/>
        <end position="348"/>
    </location>
</feature>
<feature type="turn" evidence="53">
    <location>
        <begin position="352"/>
        <end position="355"/>
    </location>
</feature>
<feature type="strand" evidence="59">
    <location>
        <begin position="358"/>
        <end position="365"/>
    </location>
</feature>
<feature type="helix" evidence="59">
    <location>
        <begin position="367"/>
        <end position="373"/>
    </location>
</feature>
<feature type="turn" evidence="58">
    <location>
        <begin position="376"/>
        <end position="378"/>
    </location>
</feature>
<feature type="turn" evidence="58">
    <location>
        <begin position="380"/>
        <end position="382"/>
    </location>
</feature>
<feature type="helix" evidence="54">
    <location>
        <begin position="383"/>
        <end position="386"/>
    </location>
</feature>
<feature type="strand" evidence="59">
    <location>
        <begin position="387"/>
        <end position="391"/>
    </location>
</feature>
<feature type="strand" evidence="59">
    <location>
        <begin position="393"/>
        <end position="398"/>
    </location>
</feature>
<feature type="helix" evidence="60">
    <location>
        <begin position="401"/>
        <end position="403"/>
    </location>
</feature>
<feature type="strand" evidence="59">
    <location>
        <begin position="407"/>
        <end position="412"/>
    </location>
</feature>
<feature type="strand" evidence="59">
    <location>
        <begin position="415"/>
        <end position="422"/>
    </location>
</feature>
<feature type="turn" evidence="61">
    <location>
        <begin position="427"/>
        <end position="429"/>
    </location>
</feature>
<feature type="strand" evidence="59">
    <location>
        <begin position="435"/>
        <end position="439"/>
    </location>
</feature>
<feature type="helix" evidence="59">
    <location>
        <begin position="440"/>
        <end position="443"/>
    </location>
</feature>
<feature type="helix" evidence="59">
    <location>
        <begin position="444"/>
        <end position="451"/>
    </location>
</feature>
<feature type="strand" evidence="59">
    <location>
        <begin position="457"/>
        <end position="463"/>
    </location>
</feature>
<comment type="function">
    <text evidence="27">Initiates the extrinsic pathway of blood coagulation. Serine protease that circulates in the blood in a zymogen form. Factor VII is converted to factor VIIa by factor Xa, factor XIIa, factor IXa, or thrombin by minor proteolysis. In the presence of tissue factor and calcium ions, factor VIIa then converts factor X to factor Xa by limited proteolysis. Factor VIIa also converts factor IX to factor IXa in the presence of tissue factor and calcium (PubMed:271951).</text>
</comment>
<comment type="catalytic activity">
    <reaction>
        <text>Selective cleavage of Arg-|-Ile bond in factor X to form factor Xa.</text>
        <dbReference type="EC" id="3.4.21.21"/>
    </reaction>
</comment>
<comment type="subunit">
    <text evidence="29 40 49">Heterodimer of a light chain and a heavy chain linked by a disulfide bond. Interacts (activated) with iripin-8, a serine protease inhibitor from Ixodes ricinus saliva (PubMed:34502392).</text>
</comment>
<comment type="interaction">
    <interactant intactId="EBI-355972">
        <id>P08709</id>
    </interactant>
    <interactant intactId="EBI-1040727">
        <id>P13726</id>
        <label>F3</label>
    </interactant>
    <organismsDiffer>false</organismsDiffer>
    <experiments>7</experiments>
</comment>
<comment type="subcellular location">
    <subcellularLocation>
        <location evidence="31">Secreted</location>
    </subcellularLocation>
</comment>
<comment type="alternative products">
    <event type="alternative splicing"/>
    <isoform>
        <id>P08709-1</id>
        <name>A</name>
        <sequence type="displayed"/>
    </isoform>
    <isoform>
        <id>P08709-2</id>
        <name>B</name>
        <sequence type="described" ref="VSP_005387"/>
    </isoform>
</comment>
<comment type="tissue specificity">
    <text>Plasma.</text>
</comment>
<comment type="PTM">
    <text>The vitamin K-dependent, enzymatic carboxylation of some glutamate residues allows the modified protein to bind calcium.</text>
</comment>
<comment type="PTM">
    <text evidence="28">The iron and 2-oxoglutarate dependent 3-hydroxylation of aspartate and asparagine is (R) stereospecific within EGF domains.</text>
</comment>
<comment type="PTM">
    <text evidence="16 17 24 28 45">O- and N-glycosylated. N-glycosylation at Asn-205 occurs cotranslationally and is mediated by STT3A-containing complexes, while glycosylation at Asn-382 is post-translational and is mediated STT3B-containing complexes before folding. O-fucosylated by POFUT1 on a conserved serine or threonine residue found in the consensus sequence C2-X(4,5)-[S/T]-C3 of EGF domains, where C2 and C3 are the second and third conserved cysteines.</text>
</comment>
<comment type="PTM">
    <text>Can be either O-glucosylated or O-xylosylated at Ser-112 by POGLUT1 in vitro.</text>
</comment>
<comment type="disease" evidence="7 9 10 11 12 14 15 18 19 20 21 23 26 31 33 34 35 36 37 38 39 41 42 43 44 46 47 48">
    <disease id="DI-01541">
        <name>Factor VII deficiency</name>
        <acronym>FA7D</acronym>
        <description>A hemorrhagic disease with variable presentation. The clinical picture can be very severe, with the early occurrence of intracerebral hemorrhages or repeated hemarthroses, or, in contrast, moderate with cutaneous-mucosal hemorrhages (epistaxis, menorrhagia) or hemorrhages provoked by a surgical intervention. Finally, numerous subjects are completely asymptomatic despite very low factor VII levels.</description>
        <dbReference type="MIM" id="227500"/>
    </disease>
    <text>The disease is caused by variants affecting the gene represented in this entry.</text>
</comment>
<comment type="pharmaceutical">
    <text>Available under the names Niastase or Novoseven (Novo Nordisk). Used for the treatment of bleeding episodes in hemophilia A or B patients with antibodies to coagulation factors VIII or IX.</text>
</comment>
<comment type="similarity">
    <text evidence="4">Belongs to the peptidase S1 family.</text>
</comment>
<comment type="online information" name="Wikipedia">
    <link uri="https://en.wikipedia.org/wiki/Factor_VII"/>
    <text>Factor VII entry</text>
</comment>
<name>FA7_HUMAN</name>
<dbReference type="EC" id="3.4.21.21"/>
<dbReference type="EMBL" id="M13232">
    <property type="protein sequence ID" value="AAA88040.1"/>
    <property type="molecule type" value="mRNA"/>
</dbReference>
<dbReference type="EMBL" id="M13232">
    <property type="protein sequence ID" value="AAA88041.1"/>
    <property type="molecule type" value="mRNA"/>
</dbReference>
<dbReference type="EMBL" id="J02933">
    <property type="protein sequence ID" value="AAA51983.1"/>
    <property type="molecule type" value="Genomic_DNA"/>
</dbReference>
<dbReference type="EMBL" id="DQ142911">
    <property type="protein sequence ID" value="ABD17891.1"/>
    <property type="molecule type" value="Genomic_DNA"/>
</dbReference>
<dbReference type="EMBL" id="AY212252">
    <property type="protein sequence ID" value="AAP33841.1"/>
    <property type="molecule type" value="Genomic_DNA"/>
</dbReference>
<dbReference type="EMBL" id="EU557239">
    <property type="protein sequence ID" value="ACB87203.1"/>
    <property type="molecule type" value="mRNA"/>
</dbReference>
<dbReference type="EMBL" id="AF466933">
    <property type="protein sequence ID" value="AAL66184.1"/>
    <property type="molecule type" value="Genomic_DNA"/>
</dbReference>
<dbReference type="EMBL" id="EF445049">
    <property type="protein sequence ID" value="ACA06107.1"/>
    <property type="molecule type" value="Genomic_DNA"/>
</dbReference>
<dbReference type="EMBL" id="EF445049">
    <property type="protein sequence ID" value="ACA06108.1"/>
    <property type="molecule type" value="Genomic_DNA"/>
</dbReference>
<dbReference type="EMBL" id="AL137002">
    <property type="status" value="NOT_ANNOTATED_CDS"/>
    <property type="molecule type" value="Genomic_DNA"/>
</dbReference>
<dbReference type="EMBL" id="BC130468">
    <property type="protein sequence ID" value="AAI30469.1"/>
    <property type="molecule type" value="mRNA"/>
</dbReference>
<dbReference type="CCDS" id="CCDS9528.1">
    <molecule id="P08709-1"/>
</dbReference>
<dbReference type="CCDS" id="CCDS9529.1">
    <molecule id="P08709-2"/>
</dbReference>
<dbReference type="PIR" id="A28322">
    <property type="entry name" value="KFHU7"/>
</dbReference>
<dbReference type="RefSeq" id="NP_000122.1">
    <molecule id="P08709-1"/>
    <property type="nucleotide sequence ID" value="NM_000131.4"/>
</dbReference>
<dbReference type="RefSeq" id="NP_062562.1">
    <molecule id="P08709-2"/>
    <property type="nucleotide sequence ID" value="NM_019616.4"/>
</dbReference>
<dbReference type="PDB" id="1BF9">
    <property type="method" value="NMR"/>
    <property type="chains" value="A=105-145"/>
</dbReference>
<dbReference type="PDB" id="1CVW">
    <property type="method" value="X-ray"/>
    <property type="resolution" value="2.28 A"/>
    <property type="chains" value="H=213-466, L=150-204"/>
</dbReference>
<dbReference type="PDB" id="1DAN">
    <property type="method" value="X-ray"/>
    <property type="resolution" value="2.00 A"/>
    <property type="chains" value="H=213-466, L=61-212"/>
</dbReference>
<dbReference type="PDB" id="1DVA">
    <property type="method" value="X-ray"/>
    <property type="resolution" value="3.00 A"/>
    <property type="chains" value="H/I=213-466, L/M=102-202"/>
</dbReference>
<dbReference type="PDB" id="1F7E">
    <property type="method" value="NMR"/>
    <property type="chains" value="A=105-147"/>
</dbReference>
<dbReference type="PDB" id="1F7M">
    <property type="method" value="NMR"/>
    <property type="chains" value="A=105-147"/>
</dbReference>
<dbReference type="PDB" id="1FAK">
    <property type="method" value="X-ray"/>
    <property type="resolution" value="2.10 A"/>
    <property type="chains" value="H=213-466, L=61-212"/>
</dbReference>
<dbReference type="PDB" id="1FF7">
    <property type="method" value="NMR"/>
    <property type="chains" value="A=105-147"/>
</dbReference>
<dbReference type="PDB" id="1FFM">
    <property type="method" value="NMR"/>
    <property type="chains" value="A=105-147"/>
</dbReference>
<dbReference type="PDB" id="1J9C">
    <property type="method" value="X-ray"/>
    <property type="resolution" value="2.90 A"/>
    <property type="chains" value="H=213-466, L=108-202"/>
</dbReference>
<dbReference type="PDB" id="1JBU">
    <property type="method" value="X-ray"/>
    <property type="resolution" value="2.00 A"/>
    <property type="chains" value="H=213-466, L=150-212"/>
</dbReference>
<dbReference type="PDB" id="1KLI">
    <property type="method" value="X-ray"/>
    <property type="resolution" value="1.69 A"/>
    <property type="chains" value="H=213-466, L=144-212"/>
</dbReference>
<dbReference type="PDB" id="1KLJ">
    <property type="method" value="X-ray"/>
    <property type="resolution" value="2.44 A"/>
    <property type="chains" value="H=213-466, L=144-212"/>
</dbReference>
<dbReference type="PDB" id="1O5D">
    <property type="method" value="X-ray"/>
    <property type="resolution" value="2.05 A"/>
    <property type="chains" value="H=213-466, L=61-212"/>
</dbReference>
<dbReference type="PDB" id="1QFK">
    <property type="method" value="X-ray"/>
    <property type="resolution" value="2.80 A"/>
    <property type="chains" value="H=213-466, L=109-212"/>
</dbReference>
<dbReference type="PDB" id="1W0Y">
    <property type="method" value="X-ray"/>
    <property type="resolution" value="2.50 A"/>
    <property type="chains" value="H=213-466, L=61-202"/>
</dbReference>
<dbReference type="PDB" id="1W2K">
    <property type="method" value="X-ray"/>
    <property type="resolution" value="3.00 A"/>
    <property type="chains" value="H=213-466, L=61-202"/>
</dbReference>
<dbReference type="PDB" id="1W7X">
    <property type="method" value="X-ray"/>
    <property type="resolution" value="1.80 A"/>
    <property type="chains" value="H=213-466, L=150-204"/>
</dbReference>
<dbReference type="PDB" id="1W8B">
    <property type="method" value="X-ray"/>
    <property type="resolution" value="3.00 A"/>
    <property type="chains" value="H=213-466, L=148-204"/>
</dbReference>
<dbReference type="PDB" id="1WQV">
    <property type="method" value="X-ray"/>
    <property type="resolution" value="2.50 A"/>
    <property type="chains" value="H=213-466, L=61-212"/>
</dbReference>
<dbReference type="PDB" id="1WSS">
    <property type="method" value="X-ray"/>
    <property type="resolution" value="2.60 A"/>
    <property type="chains" value="H=213-466, L=61-212"/>
</dbReference>
<dbReference type="PDB" id="1WTG">
    <property type="method" value="X-ray"/>
    <property type="resolution" value="2.20 A"/>
    <property type="chains" value="H=213-466, L=61-212"/>
</dbReference>
<dbReference type="PDB" id="1WUN">
    <property type="method" value="X-ray"/>
    <property type="resolution" value="2.40 A"/>
    <property type="chains" value="H=213-466, L=61-212"/>
</dbReference>
<dbReference type="PDB" id="1WV7">
    <property type="method" value="X-ray"/>
    <property type="resolution" value="2.70 A"/>
    <property type="chains" value="H=213-466, L=61-212"/>
</dbReference>
<dbReference type="PDB" id="1YGC">
    <property type="method" value="X-ray"/>
    <property type="resolution" value="2.00 A"/>
    <property type="chains" value="H=213-466, L=150-212"/>
</dbReference>
<dbReference type="PDB" id="1Z6J">
    <property type="method" value="X-ray"/>
    <property type="resolution" value="2.00 A"/>
    <property type="chains" value="H=213-466, L=61-202"/>
</dbReference>
<dbReference type="PDB" id="2A2Q">
    <property type="method" value="X-ray"/>
    <property type="resolution" value="1.80 A"/>
    <property type="chains" value="H=213-466, L=61-212"/>
</dbReference>
<dbReference type="PDB" id="2AEI">
    <property type="method" value="X-ray"/>
    <property type="resolution" value="2.52 A"/>
    <property type="chains" value="H=213-466, L=61-212"/>
</dbReference>
<dbReference type="PDB" id="2AER">
    <property type="method" value="X-ray"/>
    <property type="resolution" value="1.87 A"/>
    <property type="chains" value="H=213-466, L=61-202"/>
</dbReference>
<dbReference type="PDB" id="2B7D">
    <property type="method" value="X-ray"/>
    <property type="resolution" value="2.24 A"/>
    <property type="chains" value="H=213-466, L=61-212"/>
</dbReference>
<dbReference type="PDB" id="2B8O">
    <property type="method" value="X-ray"/>
    <property type="resolution" value="2.80 A"/>
    <property type="chains" value="H=213-466, L=61-202"/>
</dbReference>
<dbReference type="PDB" id="2BZ6">
    <property type="method" value="X-ray"/>
    <property type="resolution" value="1.60 A"/>
    <property type="chains" value="H=213-466, L=150-202"/>
</dbReference>
<dbReference type="PDB" id="2C4F">
    <property type="method" value="X-ray"/>
    <property type="resolution" value="1.72 A"/>
    <property type="chains" value="H=213-466, L=61-202"/>
</dbReference>
<dbReference type="PDB" id="2EC9">
    <property type="method" value="X-ray"/>
    <property type="resolution" value="2.00 A"/>
    <property type="chains" value="H=213-466, L=61-202"/>
</dbReference>
<dbReference type="PDB" id="2F9B">
    <property type="method" value="X-ray"/>
    <property type="resolution" value="2.54 A"/>
    <property type="chains" value="H=213-466, L=61-212"/>
</dbReference>
<dbReference type="PDB" id="2FIR">
    <property type="method" value="X-ray"/>
    <property type="resolution" value="2.00 A"/>
    <property type="chains" value="H=213-466, L=61-202"/>
</dbReference>
<dbReference type="PDB" id="2FLB">
    <property type="method" value="X-ray"/>
    <property type="resolution" value="1.95 A"/>
    <property type="chains" value="H=213-466, L=61-212"/>
</dbReference>
<dbReference type="PDB" id="2FLR">
    <property type="method" value="X-ray"/>
    <property type="resolution" value="2.35 A"/>
    <property type="chains" value="H=213-466, L=61-212"/>
</dbReference>
<dbReference type="PDB" id="2PUQ">
    <property type="method" value="X-ray"/>
    <property type="resolution" value="2.05 A"/>
    <property type="chains" value="H=213-466, L=109-202"/>
</dbReference>
<dbReference type="PDB" id="2ZP0">
    <property type="method" value="X-ray"/>
    <property type="resolution" value="2.70 A"/>
    <property type="chains" value="H=213-466, L=61-212"/>
</dbReference>
<dbReference type="PDB" id="2ZWL">
    <property type="method" value="X-ray"/>
    <property type="resolution" value="2.20 A"/>
    <property type="chains" value="H=213-466, L=61-212"/>
</dbReference>
<dbReference type="PDB" id="2ZZU">
    <property type="method" value="X-ray"/>
    <property type="resolution" value="2.50 A"/>
    <property type="chains" value="H=213-466, L=61-212"/>
</dbReference>
<dbReference type="PDB" id="3ELA">
    <property type="method" value="X-ray"/>
    <property type="resolution" value="2.20 A"/>
    <property type="chains" value="H=213-466, L=61-212"/>
</dbReference>
<dbReference type="PDB" id="3TH2">
    <property type="method" value="X-ray"/>
    <property type="resolution" value="1.72 A"/>
    <property type="chains" value="H=213-466, L=61-202"/>
</dbReference>
<dbReference type="PDB" id="3TH3">
    <property type="method" value="X-ray"/>
    <property type="resolution" value="2.70 A"/>
    <property type="chains" value="H=213-466, L=61-202"/>
</dbReference>
<dbReference type="PDB" id="3TH4">
    <property type="method" value="X-ray"/>
    <property type="resolution" value="1.80 A"/>
    <property type="chains" value="H=213-466, L=61-202"/>
</dbReference>
<dbReference type="PDB" id="4IBL">
    <property type="method" value="X-ray"/>
    <property type="resolution" value="1.80 A"/>
    <property type="chains" value="H=213-466, L=61-212"/>
</dbReference>
<dbReference type="PDB" id="4ISH">
    <property type="method" value="X-ray"/>
    <property type="resolution" value="1.82 A"/>
    <property type="chains" value="H=213-466, L=150-204"/>
</dbReference>
<dbReference type="PDB" id="4ISI">
    <property type="method" value="X-ray"/>
    <property type="resolution" value="1.94 A"/>
    <property type="chains" value="H=213-466, L=150-204"/>
</dbReference>
<dbReference type="PDB" id="4JYU">
    <property type="method" value="X-ray"/>
    <property type="resolution" value="1.80 A"/>
    <property type="chains" value="H=213-466, L=150-204"/>
</dbReference>
<dbReference type="PDB" id="4JYV">
    <property type="method" value="X-ray"/>
    <property type="resolution" value="2.19 A"/>
    <property type="chains" value="H=213-466, L=150-204"/>
</dbReference>
<dbReference type="PDB" id="4JZD">
    <property type="method" value="X-ray"/>
    <property type="resolution" value="2.20 A"/>
    <property type="chains" value="H=213-466, L=150-204"/>
</dbReference>
<dbReference type="PDB" id="4JZE">
    <property type="method" value="X-ray"/>
    <property type="resolution" value="1.52 A"/>
    <property type="chains" value="H=213-466, L=150-204"/>
</dbReference>
<dbReference type="PDB" id="4JZF">
    <property type="method" value="X-ray"/>
    <property type="resolution" value="1.84 A"/>
    <property type="chains" value="H=213-466, L=150-204"/>
</dbReference>
<dbReference type="PDB" id="4NA9">
    <property type="method" value="X-ray"/>
    <property type="resolution" value="2.24 A"/>
    <property type="chains" value="H=213-466, L=150-204"/>
</dbReference>
<dbReference type="PDB" id="4NG9">
    <property type="method" value="X-ray"/>
    <property type="resolution" value="2.20 A"/>
    <property type="chains" value="H=213-466, L=150-204"/>
</dbReference>
<dbReference type="PDB" id="4NGA">
    <property type="method" value="X-ray"/>
    <property type="resolution" value="2.15 A"/>
    <property type="chains" value="H=213-466, L=150-204"/>
</dbReference>
<dbReference type="PDB" id="4X8S">
    <property type="method" value="X-ray"/>
    <property type="resolution" value="2.10 A"/>
    <property type="chains" value="H=213-466, L=150-204"/>
</dbReference>
<dbReference type="PDB" id="4X8T">
    <property type="method" value="X-ray"/>
    <property type="resolution" value="2.20 A"/>
    <property type="chains" value="H=213-466, L=150-204"/>
</dbReference>
<dbReference type="PDB" id="4X8U">
    <property type="method" value="X-ray"/>
    <property type="resolution" value="2.10 A"/>
    <property type="chains" value="H=213-466, L=150-204"/>
</dbReference>
<dbReference type="PDB" id="4X8V">
    <property type="method" value="X-ray"/>
    <property type="resolution" value="2.50 A"/>
    <property type="chains" value="H=213-466, L=150-204"/>
</dbReference>
<dbReference type="PDB" id="4YLQ">
    <property type="method" value="X-ray"/>
    <property type="resolution" value="1.40 A"/>
    <property type="chains" value="H=213-466, L=61-212"/>
</dbReference>
<dbReference type="PDB" id="4YT6">
    <property type="method" value="X-ray"/>
    <property type="resolution" value="2.07 A"/>
    <property type="chains" value="H=213-466, L=148-204"/>
</dbReference>
<dbReference type="PDB" id="4YT7">
    <property type="method" value="X-ray"/>
    <property type="resolution" value="2.30 A"/>
    <property type="chains" value="H=213-466, L=148-204"/>
</dbReference>
<dbReference type="PDB" id="4Z6A">
    <property type="method" value="X-ray"/>
    <property type="resolution" value="2.25 A"/>
    <property type="chains" value="H=213-466, L=108-203"/>
</dbReference>
<dbReference type="PDB" id="4ZMA">
    <property type="method" value="X-ray"/>
    <property type="resolution" value="2.30 A"/>
    <property type="chains" value="H=213-466, L=61-212"/>
</dbReference>
<dbReference type="PDB" id="4ZXX">
    <property type="method" value="X-ray"/>
    <property type="resolution" value="2.60 A"/>
    <property type="chains" value="H=213-466, L=150-204"/>
</dbReference>
<dbReference type="PDB" id="4ZXY">
    <property type="method" value="X-ray"/>
    <property type="resolution" value="2.06 A"/>
    <property type="chains" value="H=213-466, L=150-204"/>
</dbReference>
<dbReference type="PDB" id="5I46">
    <property type="method" value="X-ray"/>
    <property type="resolution" value="2.06 A"/>
    <property type="chains" value="H=213-466, L=150-204"/>
</dbReference>
<dbReference type="PDB" id="5L0S">
    <property type="method" value="X-ray"/>
    <property type="resolution" value="1.45 A"/>
    <property type="chains" value="B=105-145"/>
</dbReference>
<dbReference type="PDB" id="5L2Y">
    <property type="method" value="X-ray"/>
    <property type="resolution" value="1.82 A"/>
    <property type="chains" value="H=213-466, L=150-204"/>
</dbReference>
<dbReference type="PDB" id="5L2Z">
    <property type="method" value="X-ray"/>
    <property type="resolution" value="1.79 A"/>
    <property type="chains" value="H=213-466, L=147-204"/>
</dbReference>
<dbReference type="PDB" id="5L30">
    <property type="method" value="X-ray"/>
    <property type="resolution" value="1.73 A"/>
    <property type="chains" value="H=213-466, L=147-204"/>
</dbReference>
<dbReference type="PDB" id="5PA8">
    <property type="method" value="X-ray"/>
    <property type="resolution" value="1.98 A"/>
    <property type="chains" value="A=149-212, C=213-466"/>
</dbReference>
<dbReference type="PDB" id="5PA9">
    <property type="method" value="X-ray"/>
    <property type="resolution" value="1.55 A"/>
    <property type="chains" value="A=149-212, C=213-466"/>
</dbReference>
<dbReference type="PDB" id="5PAA">
    <property type="method" value="X-ray"/>
    <property type="resolution" value="1.98 A"/>
    <property type="chains" value="A=149-212, C=213-466"/>
</dbReference>
<dbReference type="PDB" id="5PAB">
    <property type="method" value="X-ray"/>
    <property type="resolution" value="1.99 A"/>
    <property type="chains" value="H=213-466, L=149-212"/>
</dbReference>
<dbReference type="PDB" id="5PAC">
    <property type="method" value="X-ray"/>
    <property type="resolution" value="1.50 A"/>
    <property type="chains" value="A=149-212, B=213-466"/>
</dbReference>
<dbReference type="PDB" id="5PAE">
    <property type="method" value="X-ray"/>
    <property type="resolution" value="1.45 A"/>
    <property type="chains" value="A=149-212, B=213-466"/>
</dbReference>
<dbReference type="PDB" id="5PAF">
    <property type="method" value="X-ray"/>
    <property type="resolution" value="1.50 A"/>
    <property type="chains" value="A=149-212, B=213-466"/>
</dbReference>
<dbReference type="PDB" id="5PAG">
    <property type="method" value="X-ray"/>
    <property type="resolution" value="1.36 A"/>
    <property type="chains" value="A=149-212, B=213-466"/>
</dbReference>
<dbReference type="PDB" id="5PAI">
    <property type="method" value="X-ray"/>
    <property type="resolution" value="1.73 A"/>
    <property type="chains" value="A=149-212, B=213-466"/>
</dbReference>
<dbReference type="PDB" id="5PAJ">
    <property type="method" value="X-ray"/>
    <property type="resolution" value="1.70 A"/>
    <property type="chains" value="A=149-212, B=213-466"/>
</dbReference>
<dbReference type="PDB" id="5PAK">
    <property type="method" value="X-ray"/>
    <property type="resolution" value="1.56 A"/>
    <property type="chains" value="A=149-212, C=213-466"/>
</dbReference>
<dbReference type="PDB" id="5PAM">
    <property type="method" value="X-ray"/>
    <property type="resolution" value="1.60 A"/>
    <property type="chains" value="A=149-212, B=213-466"/>
</dbReference>
<dbReference type="PDB" id="5PAN">
    <property type="method" value="X-ray"/>
    <property type="resolution" value="1.62 A"/>
    <property type="chains" value="A=149-212, B=213-466"/>
</dbReference>
<dbReference type="PDB" id="5PAO">
    <property type="method" value="X-ray"/>
    <property type="resolution" value="1.40 A"/>
    <property type="chains" value="A=149-212, C=213-466"/>
</dbReference>
<dbReference type="PDB" id="5PAQ">
    <property type="method" value="X-ray"/>
    <property type="resolution" value="1.59 A"/>
    <property type="chains" value="A=149-212, B=213-466"/>
</dbReference>
<dbReference type="PDB" id="5PAR">
    <property type="method" value="X-ray"/>
    <property type="resolution" value="2.10 A"/>
    <property type="chains" value="A=149-212, C=213-466"/>
</dbReference>
<dbReference type="PDB" id="5PAS">
    <property type="method" value="X-ray"/>
    <property type="resolution" value="1.48 A"/>
    <property type="chains" value="A=149-212, C=213-466"/>
</dbReference>
<dbReference type="PDB" id="5PAT">
    <property type="method" value="X-ray"/>
    <property type="resolution" value="1.60 A"/>
    <property type="chains" value="A=149-212, B=213-466"/>
</dbReference>
<dbReference type="PDB" id="5PAU">
    <property type="method" value="X-ray"/>
    <property type="resolution" value="1.55 A"/>
    <property type="chains" value="A=149-212, C=213-466"/>
</dbReference>
<dbReference type="PDB" id="5PAV">
    <property type="method" value="X-ray"/>
    <property type="resolution" value="1.40 A"/>
    <property type="chains" value="A=149-212, C=213-466"/>
</dbReference>
<dbReference type="PDB" id="5PAW">
    <property type="method" value="X-ray"/>
    <property type="resolution" value="2.20 A"/>
    <property type="chains" value="A=149-212, B=213-466"/>
</dbReference>
<dbReference type="PDB" id="5PAX">
    <property type="method" value="X-ray"/>
    <property type="resolution" value="1.36 A"/>
    <property type="chains" value="A=149-212, C=213-466"/>
</dbReference>
<dbReference type="PDB" id="5PAY">
    <property type="method" value="X-ray"/>
    <property type="resolution" value="1.66 A"/>
    <property type="chains" value="A=149-212, C=213-466"/>
</dbReference>
<dbReference type="PDB" id="5PB0">
    <property type="method" value="X-ray"/>
    <property type="resolution" value="1.98 A"/>
    <property type="chains" value="A=149-212, B=213-466"/>
</dbReference>
<dbReference type="PDB" id="5PB1">
    <property type="method" value="X-ray"/>
    <property type="resolution" value="1.90 A"/>
    <property type="chains" value="A=149-212, D=213-466"/>
</dbReference>
<dbReference type="PDB" id="5PB2">
    <property type="method" value="X-ray"/>
    <property type="resolution" value="1.45 A"/>
    <property type="chains" value="A=149-212, C=213-466"/>
</dbReference>
<dbReference type="PDB" id="5PB3">
    <property type="method" value="X-ray"/>
    <property type="resolution" value="1.90 A"/>
    <property type="chains" value="A=149-212, C=213-466"/>
</dbReference>
<dbReference type="PDB" id="5PB4">
    <property type="method" value="X-ray"/>
    <property type="resolution" value="2.43 A"/>
    <property type="chains" value="A=149-212, C=213-466"/>
</dbReference>
<dbReference type="PDB" id="5PB5">
    <property type="method" value="X-ray"/>
    <property type="resolution" value="1.84 A"/>
    <property type="chains" value="A=149-212, B=213-466"/>
</dbReference>
<dbReference type="PDB" id="5PB6">
    <property type="method" value="X-ray"/>
    <property type="resolution" value="1.90 A"/>
    <property type="chains" value="A=149-212, C=213-466"/>
</dbReference>
<dbReference type="PDB" id="5TQE">
    <property type="method" value="X-ray"/>
    <property type="resolution" value="1.90 A"/>
    <property type="chains" value="H=213-466, L=150-204"/>
</dbReference>
<dbReference type="PDB" id="5TQF">
    <property type="method" value="X-ray"/>
    <property type="resolution" value="1.85 A"/>
    <property type="chains" value="H=213-466, L=150-204"/>
</dbReference>
<dbReference type="PDB" id="5TQG">
    <property type="method" value="X-ray"/>
    <property type="resolution" value="1.90 A"/>
    <property type="chains" value="H=213-466, L=150-204"/>
</dbReference>
<dbReference type="PDB" id="5U6J">
    <property type="method" value="X-ray"/>
    <property type="resolution" value="2.30 A"/>
    <property type="chains" value="H=213-466, L=150-204"/>
</dbReference>
<dbReference type="PDB" id="8UUD">
    <property type="method" value="X-ray"/>
    <property type="resolution" value="2.40 A"/>
    <property type="chains" value="H=213-466, L=61-202"/>
</dbReference>
<dbReference type="PDBsum" id="1BF9"/>
<dbReference type="PDBsum" id="1CVW"/>
<dbReference type="PDBsum" id="1DAN"/>
<dbReference type="PDBsum" id="1DVA"/>
<dbReference type="PDBsum" id="1F7E"/>
<dbReference type="PDBsum" id="1F7M"/>
<dbReference type="PDBsum" id="1FAK"/>
<dbReference type="PDBsum" id="1FF7"/>
<dbReference type="PDBsum" id="1FFM"/>
<dbReference type="PDBsum" id="1J9C"/>
<dbReference type="PDBsum" id="1JBU"/>
<dbReference type="PDBsum" id="1KLI"/>
<dbReference type="PDBsum" id="1KLJ"/>
<dbReference type="PDBsum" id="1O5D"/>
<dbReference type="PDBsum" id="1QFK"/>
<dbReference type="PDBsum" id="1W0Y"/>
<dbReference type="PDBsum" id="1W2K"/>
<dbReference type="PDBsum" id="1W7X"/>
<dbReference type="PDBsum" id="1W8B"/>
<dbReference type="PDBsum" id="1WQV"/>
<dbReference type="PDBsum" id="1WSS"/>
<dbReference type="PDBsum" id="1WTG"/>
<dbReference type="PDBsum" id="1WUN"/>
<dbReference type="PDBsum" id="1WV7"/>
<dbReference type="PDBsum" id="1YGC"/>
<dbReference type="PDBsum" id="1Z6J"/>
<dbReference type="PDBsum" id="2A2Q"/>
<dbReference type="PDBsum" id="2AEI"/>
<dbReference type="PDBsum" id="2AER"/>
<dbReference type="PDBsum" id="2B7D"/>
<dbReference type="PDBsum" id="2B8O"/>
<dbReference type="PDBsum" id="2BZ6"/>
<dbReference type="PDBsum" id="2C4F"/>
<dbReference type="PDBsum" id="2EC9"/>
<dbReference type="PDBsum" id="2F9B"/>
<dbReference type="PDBsum" id="2FIR"/>
<dbReference type="PDBsum" id="2FLB"/>
<dbReference type="PDBsum" id="2FLR"/>
<dbReference type="PDBsum" id="2PUQ"/>
<dbReference type="PDBsum" id="2ZP0"/>
<dbReference type="PDBsum" id="2ZWL"/>
<dbReference type="PDBsum" id="2ZZU"/>
<dbReference type="PDBsum" id="3ELA"/>
<dbReference type="PDBsum" id="3TH2"/>
<dbReference type="PDBsum" id="3TH3"/>
<dbReference type="PDBsum" id="3TH4"/>
<dbReference type="PDBsum" id="4IBL"/>
<dbReference type="PDBsum" id="4ISH"/>
<dbReference type="PDBsum" id="4ISI"/>
<dbReference type="PDBsum" id="4JYU"/>
<dbReference type="PDBsum" id="4JYV"/>
<dbReference type="PDBsum" id="4JZD"/>
<dbReference type="PDBsum" id="4JZE"/>
<dbReference type="PDBsum" id="4JZF"/>
<dbReference type="PDBsum" id="4NA9"/>
<dbReference type="PDBsum" id="4NG9"/>
<dbReference type="PDBsum" id="4NGA"/>
<dbReference type="PDBsum" id="4X8S"/>
<dbReference type="PDBsum" id="4X8T"/>
<dbReference type="PDBsum" id="4X8U"/>
<dbReference type="PDBsum" id="4X8V"/>
<dbReference type="PDBsum" id="4YLQ"/>
<dbReference type="PDBsum" id="4YT6"/>
<dbReference type="PDBsum" id="4YT7"/>
<dbReference type="PDBsum" id="4Z6A"/>
<dbReference type="PDBsum" id="4ZMA"/>
<dbReference type="PDBsum" id="4ZXX"/>
<dbReference type="PDBsum" id="4ZXY"/>
<dbReference type="PDBsum" id="5I46"/>
<dbReference type="PDBsum" id="5L0S"/>
<dbReference type="PDBsum" id="5L2Y"/>
<dbReference type="PDBsum" id="5L2Z"/>
<dbReference type="PDBsum" id="5L30"/>
<dbReference type="PDBsum" id="5PA8"/>
<dbReference type="PDBsum" id="5PA9"/>
<dbReference type="PDBsum" id="5PAA"/>
<dbReference type="PDBsum" id="5PAB"/>
<dbReference type="PDBsum" id="5PAC"/>
<dbReference type="PDBsum" id="5PAE"/>
<dbReference type="PDBsum" id="5PAF"/>
<dbReference type="PDBsum" id="5PAG"/>
<dbReference type="PDBsum" id="5PAI"/>
<dbReference type="PDBsum" id="5PAJ"/>
<dbReference type="PDBsum" id="5PAK"/>
<dbReference type="PDBsum" id="5PAM"/>
<dbReference type="PDBsum" id="5PAN"/>
<dbReference type="PDBsum" id="5PAO"/>
<dbReference type="PDBsum" id="5PAQ"/>
<dbReference type="PDBsum" id="5PAR"/>
<dbReference type="PDBsum" id="5PAS"/>
<dbReference type="PDBsum" id="5PAT"/>
<dbReference type="PDBsum" id="5PAU"/>
<dbReference type="PDBsum" id="5PAV"/>
<dbReference type="PDBsum" id="5PAW"/>
<dbReference type="PDBsum" id="5PAX"/>
<dbReference type="PDBsum" id="5PAY"/>
<dbReference type="PDBsum" id="5PB0"/>
<dbReference type="PDBsum" id="5PB1"/>
<dbReference type="PDBsum" id="5PB2"/>
<dbReference type="PDBsum" id="5PB3"/>
<dbReference type="PDBsum" id="5PB4"/>
<dbReference type="PDBsum" id="5PB5"/>
<dbReference type="PDBsum" id="5PB6"/>
<dbReference type="PDBsum" id="5TQE"/>
<dbReference type="PDBsum" id="5TQF"/>
<dbReference type="PDBsum" id="5TQG"/>
<dbReference type="PDBsum" id="5U6J"/>
<dbReference type="PDBsum" id="8UUD"/>
<dbReference type="SMR" id="P08709"/>
<dbReference type="BioGRID" id="108453">
    <property type="interactions" value="20"/>
</dbReference>
<dbReference type="ComplexPortal" id="CPX-2808">
    <property type="entry name" value="Coagulation factor VIIa - tissue factor complex"/>
</dbReference>
<dbReference type="ComplexPortal" id="CPX-6211">
    <property type="entry name" value="Coagulation factor VIIa complex"/>
</dbReference>
<dbReference type="CORUM" id="P08709"/>
<dbReference type="DIP" id="DIP-6135N"/>
<dbReference type="ELM" id="P08709"/>
<dbReference type="FunCoup" id="P08709">
    <property type="interactions" value="355"/>
</dbReference>
<dbReference type="IntAct" id="P08709">
    <property type="interactions" value="13"/>
</dbReference>
<dbReference type="STRING" id="9606.ENSP00000364731"/>
<dbReference type="BindingDB" id="P08709"/>
<dbReference type="ChEMBL" id="CHEMBL3991"/>
<dbReference type="DrugBank" id="DB04590">
    <property type="generic name" value="(2R)-({4-[AMINO(IMINO)METHYL]PHENYL}AMINO){5-ETHOXY-2-FLUORO-3-[(3R)-TETRAHYDROFURAN-3-YLOXY]PHENYL}ACETICACID"/>
</dbReference>
<dbReference type="DrugBank" id="DB07207">
    <property type="generic name" value="2-(4-HYDROXY-5-PHENYL-1H-PYRAZOL-3-YL)-1H-BENZOIMIDAZOLE-5-CARBOXAMIDINE"/>
</dbReference>
<dbReference type="DrugBank" id="DB04758">
    <property type="generic name" value="2-[2-ETHANESULFONYLAMINO-3-(1H-INDOL-3-YL)-PROPIONYLAMINO]-PENTANEDIOIC ACID 5-AMIDE 1-(4-CARBAMIM IDOYL-BENZYLAMIDE)"/>
</dbReference>
<dbReference type="DrugBank" id="DB04606">
    <property type="generic name" value="2-[2-ETHANESULFONYLAMINO-3-(5-PROPOXY-1H-INDOL-3-YL)-PROPIONYLAMINO]-PENTANEDIOIC ACID 5-AMIDE 1-(4-CARBAMIMIDOYL-BENZYLAMIDE)"/>
</dbReference>
<dbReference type="DrugBank" id="DB04593">
    <property type="generic name" value="3-({1-[3-CARBAMIMIDOYL-1-(4-CARBAMIMIDOYL-BENZYLCARBAMOYL)-PROPYLCARBAMOYL]-2-METHYL-BUTYLSULFAMOYL}-METHYL)-BENZOIC ACID"/>
</dbReference>
<dbReference type="DrugBank" id="DB07376">
    <property type="generic name" value="5-(DIMETHYLAMINO)-1-NAPHTHALENESULFONIC ACID(DANSYL ACID)"/>
</dbReference>
<dbReference type="DrugBank" id="DB07247">
    <property type="generic name" value="[2'-HYDROXY-3'-(1H-PYRROLO[3,2-C]PYRIDIN-2-YL)-BIPHENYL-3-YLMETHYL]-UREA"/>
</dbReference>
<dbReference type="DrugBank" id="DB08232">
    <property type="generic name" value="[5-(5-Amino-1H-pyrrolo[3,2-b]pyridin-2-yl)-6-hydroxy-3'-nitro-3-biphenylyl]acetic acid"/>
</dbReference>
<dbReference type="DrugBank" id="DB06552">
    <property type="generic name" value="Anpocogin"/>
</dbReference>
<dbReference type="DrugBank" id="DB13151">
    <property type="generic name" value="Anti-inhibitor coagulant complex"/>
</dbReference>
<dbReference type="DrugBank" id="DB00100">
    <property type="generic name" value="Coagulation Factor IX (Recombinant)"/>
</dbReference>
<dbReference type="DrugBank" id="DB13152">
    <property type="generic name" value="Coagulation Factor IX Human"/>
</dbReference>
<dbReference type="DrugBank" id="DB09332">
    <property type="generic name" value="Kappadione"/>
</dbReference>
<dbReference type="DrugBank" id="DB04767">
    <property type="generic name" value="N-[1-(4-CARBAMIMIDOYL-BENZYLCARBAMOYL)-3-METHYLSULFANYL-PROPYL]-3-HYDROXY-2-PROPOXYAMINO-BUTYRAMID"/>
</dbReference>
<dbReference type="DrugBank" id="DB13933">
    <property type="generic name" value="Nonacog beta pegol"/>
</dbReference>
<dbReference type="DrugCentral" id="P08709"/>
<dbReference type="GuidetoPHARMACOLOGY" id="2363"/>
<dbReference type="MEROPS" id="S01.215"/>
<dbReference type="GlyConnect" id="98">
    <property type="glycosylation" value="1 O-Fuc glycan (1 site), 2 O-Glc glycans (1 site), 1 O-Linked glycan (1 site)"/>
</dbReference>
<dbReference type="GlyCosmos" id="P08709">
    <property type="glycosylation" value="4 sites, 13 glycans"/>
</dbReference>
<dbReference type="GlyGen" id="P08709">
    <property type="glycosylation" value="4 sites, 14 N-linked glycans (2 sites)"/>
</dbReference>
<dbReference type="iPTMnet" id="P08709"/>
<dbReference type="MetOSite" id="P08709"/>
<dbReference type="PhosphoSitePlus" id="P08709"/>
<dbReference type="BioMuta" id="F7"/>
<dbReference type="DMDM" id="119766"/>
<dbReference type="jPOST" id="P08709"/>
<dbReference type="MassIVE" id="P08709"/>
<dbReference type="PaxDb" id="9606-ENSP00000364731"/>
<dbReference type="PeptideAtlas" id="P08709"/>
<dbReference type="ProteomicsDB" id="52160">
    <molecule id="P08709-1"/>
</dbReference>
<dbReference type="ProteomicsDB" id="52161">
    <molecule id="P08709-2"/>
</dbReference>
<dbReference type="ABCD" id="P08709">
    <property type="antibodies" value="1 sequenced antibody"/>
</dbReference>
<dbReference type="Antibodypedia" id="11679">
    <property type="antibodies" value="697 antibodies from 38 providers"/>
</dbReference>
<dbReference type="DNASU" id="2155"/>
<dbReference type="Ensembl" id="ENST00000346342.8">
    <molecule id="P08709-2"/>
    <property type="protein sequence ID" value="ENSP00000329546.4"/>
    <property type="gene ID" value="ENSG00000057593.14"/>
</dbReference>
<dbReference type="Ensembl" id="ENST00000375581.3">
    <molecule id="P08709-1"/>
    <property type="protein sequence ID" value="ENSP00000364731.3"/>
    <property type="gene ID" value="ENSG00000057593.14"/>
</dbReference>
<dbReference type="GeneID" id="2155"/>
<dbReference type="KEGG" id="hsa:2155"/>
<dbReference type="MANE-Select" id="ENST00000346342.8">
    <molecule id="P08709-2"/>
    <property type="protein sequence ID" value="ENSP00000329546.4"/>
    <property type="RefSeq nucleotide sequence ID" value="NM_019616.4"/>
    <property type="RefSeq protein sequence ID" value="NP_062562.1"/>
</dbReference>
<dbReference type="UCSC" id="uc001vsv.5">
    <molecule id="P08709-1"/>
    <property type="organism name" value="human"/>
</dbReference>
<dbReference type="AGR" id="HGNC:3544"/>
<dbReference type="CTD" id="2155"/>
<dbReference type="DisGeNET" id="2155"/>
<dbReference type="GeneCards" id="F7"/>
<dbReference type="HGNC" id="HGNC:3544">
    <property type="gene designation" value="F7"/>
</dbReference>
<dbReference type="HPA" id="ENSG00000057593">
    <property type="expression patterns" value="Tissue enriched (liver)"/>
</dbReference>
<dbReference type="MalaCards" id="F7"/>
<dbReference type="MIM" id="227500">
    <property type="type" value="phenotype"/>
</dbReference>
<dbReference type="MIM" id="613878">
    <property type="type" value="gene"/>
</dbReference>
<dbReference type="neXtProt" id="NX_P08709"/>
<dbReference type="OpenTargets" id="ENSG00000057593"/>
<dbReference type="Orphanet" id="327">
    <property type="disease" value="Congenital factor VII deficiency"/>
</dbReference>
<dbReference type="PharmGKB" id="PA160"/>
<dbReference type="VEuPathDB" id="HostDB:ENSG00000057593"/>
<dbReference type="eggNOG" id="ENOG502QRGI">
    <property type="taxonomic scope" value="Eukaryota"/>
</dbReference>
<dbReference type="GeneTree" id="ENSGT00940000154474"/>
<dbReference type="HOGENOM" id="CLU_006842_19_5_1"/>
<dbReference type="InParanoid" id="P08709"/>
<dbReference type="OMA" id="QGRNCET"/>
<dbReference type="OrthoDB" id="10004439at2759"/>
<dbReference type="PAN-GO" id="P08709">
    <property type="GO annotations" value="3 GO annotations based on evolutionary models"/>
</dbReference>
<dbReference type="PhylomeDB" id="P08709"/>
<dbReference type="TreeFam" id="TF327329"/>
<dbReference type="BioCyc" id="MetaCyc:HS00709-MONOMER"/>
<dbReference type="BRENDA" id="3.4.21.21">
    <property type="organism ID" value="2681"/>
</dbReference>
<dbReference type="PathwayCommons" id="P08709"/>
<dbReference type="Reactome" id="R-HSA-1368108">
    <property type="pathway name" value="BMAL1:CLOCK,NPAS2 activates circadian gene expression"/>
</dbReference>
<dbReference type="Reactome" id="R-HSA-140834">
    <property type="pathway name" value="Extrinsic Pathway of Fibrin Clot Formation"/>
</dbReference>
<dbReference type="Reactome" id="R-HSA-159740">
    <property type="pathway name" value="Gamma-carboxylation of protein precursors"/>
</dbReference>
<dbReference type="Reactome" id="R-HSA-159763">
    <property type="pathway name" value="Transport of gamma-carboxylated protein precursors from the endoplasmic reticulum to the Golgi apparatus"/>
</dbReference>
<dbReference type="Reactome" id="R-HSA-159782">
    <property type="pathway name" value="Removal of aminoterminal propeptides from gamma-carboxylated proteins"/>
</dbReference>
<dbReference type="SABIO-RK" id="P08709"/>
<dbReference type="SignaLink" id="P08709"/>
<dbReference type="SIGNOR" id="P08709"/>
<dbReference type="BioGRID-ORCS" id="2155">
    <property type="hits" value="16 hits in 1160 CRISPR screens"/>
</dbReference>
<dbReference type="EvolutionaryTrace" id="P08709"/>
<dbReference type="GeneWiki" id="Factor_VII"/>
<dbReference type="GenomeRNAi" id="2155"/>
<dbReference type="Pharos" id="P08709">
    <property type="development level" value="Tchem"/>
</dbReference>
<dbReference type="PRO" id="PR:P08709"/>
<dbReference type="Proteomes" id="UP000005640">
    <property type="component" value="Chromosome 13"/>
</dbReference>
<dbReference type="RNAct" id="P08709">
    <property type="molecule type" value="protein"/>
</dbReference>
<dbReference type="Bgee" id="ENSG00000057593">
    <property type="expression patterns" value="Expressed in right lobe of liver and 125 other cell types or tissues"/>
</dbReference>
<dbReference type="ExpressionAtlas" id="P08709">
    <property type="expression patterns" value="baseline and differential"/>
</dbReference>
<dbReference type="GO" id="GO:0062023">
    <property type="term" value="C:collagen-containing extracellular matrix"/>
    <property type="evidence" value="ECO:0007005"/>
    <property type="project" value="BHF-UCL"/>
</dbReference>
<dbReference type="GO" id="GO:0005788">
    <property type="term" value="C:endoplasmic reticulum lumen"/>
    <property type="evidence" value="ECO:0000304"/>
    <property type="project" value="Reactome"/>
</dbReference>
<dbReference type="GO" id="GO:0005576">
    <property type="term" value="C:extracellular region"/>
    <property type="evidence" value="ECO:0000304"/>
    <property type="project" value="Reactome"/>
</dbReference>
<dbReference type="GO" id="GO:0005615">
    <property type="term" value="C:extracellular space"/>
    <property type="evidence" value="ECO:0000318"/>
    <property type="project" value="GO_Central"/>
</dbReference>
<dbReference type="GO" id="GO:0005796">
    <property type="term" value="C:Golgi lumen"/>
    <property type="evidence" value="ECO:0000304"/>
    <property type="project" value="Reactome"/>
</dbReference>
<dbReference type="GO" id="GO:0005886">
    <property type="term" value="C:plasma membrane"/>
    <property type="evidence" value="ECO:0000304"/>
    <property type="project" value="Reactome"/>
</dbReference>
<dbReference type="GO" id="GO:1905286">
    <property type="term" value="C:serine-type peptidase complex"/>
    <property type="evidence" value="ECO:0000353"/>
    <property type="project" value="BHF-UCL"/>
</dbReference>
<dbReference type="GO" id="GO:0031982">
    <property type="term" value="C:vesicle"/>
    <property type="evidence" value="ECO:0007669"/>
    <property type="project" value="Ensembl"/>
</dbReference>
<dbReference type="GO" id="GO:0005509">
    <property type="term" value="F:calcium ion binding"/>
    <property type="evidence" value="ECO:0007669"/>
    <property type="project" value="InterPro"/>
</dbReference>
<dbReference type="GO" id="GO:0004252">
    <property type="term" value="F:serine-type endopeptidase activity"/>
    <property type="evidence" value="ECO:0000304"/>
    <property type="project" value="ProtInc"/>
</dbReference>
<dbReference type="GO" id="GO:0008236">
    <property type="term" value="F:serine-type peptidase activity"/>
    <property type="evidence" value="ECO:0000304"/>
    <property type="project" value="ProtInc"/>
</dbReference>
<dbReference type="GO" id="GO:0005102">
    <property type="term" value="F:signaling receptor binding"/>
    <property type="evidence" value="ECO:0007669"/>
    <property type="project" value="Ensembl"/>
</dbReference>
<dbReference type="GO" id="GO:0031100">
    <property type="term" value="P:animal organ regeneration"/>
    <property type="evidence" value="ECO:0007669"/>
    <property type="project" value="Ensembl"/>
</dbReference>
<dbReference type="GO" id="GO:0007596">
    <property type="term" value="P:blood coagulation"/>
    <property type="evidence" value="ECO:0000314"/>
    <property type="project" value="BHF-UCL"/>
</dbReference>
<dbReference type="GO" id="GO:0007623">
    <property type="term" value="P:circadian rhythm"/>
    <property type="evidence" value="ECO:0007669"/>
    <property type="project" value="Ensembl"/>
</dbReference>
<dbReference type="GO" id="GO:0030194">
    <property type="term" value="P:positive regulation of blood coagulation"/>
    <property type="evidence" value="ECO:0007669"/>
    <property type="project" value="Ensembl"/>
</dbReference>
<dbReference type="GO" id="GO:0030335">
    <property type="term" value="P:positive regulation of cell migration"/>
    <property type="evidence" value="ECO:0000304"/>
    <property type="project" value="BHF-UCL"/>
</dbReference>
<dbReference type="GO" id="GO:0002690">
    <property type="term" value="P:positive regulation of leukocyte chemotaxis"/>
    <property type="evidence" value="ECO:0000314"/>
    <property type="project" value="BHF-UCL"/>
</dbReference>
<dbReference type="GO" id="GO:0010641">
    <property type="term" value="P:positive regulation of platelet-derived growth factor receptor signaling pathway"/>
    <property type="evidence" value="ECO:0000314"/>
    <property type="project" value="BHF-UCL"/>
</dbReference>
<dbReference type="GO" id="GO:0050927">
    <property type="term" value="P:positive regulation of positive chemotaxis"/>
    <property type="evidence" value="ECO:0000314"/>
    <property type="project" value="BHF-UCL"/>
</dbReference>
<dbReference type="GO" id="GO:0032008">
    <property type="term" value="P:positive regulation of TOR signaling"/>
    <property type="evidence" value="ECO:0000314"/>
    <property type="project" value="BHF-UCL"/>
</dbReference>
<dbReference type="GO" id="GO:0016485">
    <property type="term" value="P:protein processing"/>
    <property type="evidence" value="ECO:0000314"/>
    <property type="project" value="BHF-UCL"/>
</dbReference>
<dbReference type="GO" id="GO:1904612">
    <property type="term" value="P:response to 2,3,7,8-tetrachlorodibenzodioxine"/>
    <property type="evidence" value="ECO:0007669"/>
    <property type="project" value="Ensembl"/>
</dbReference>
<dbReference type="GO" id="GO:1905217">
    <property type="term" value="P:response to astaxanthin"/>
    <property type="evidence" value="ECO:0007669"/>
    <property type="project" value="Ensembl"/>
</dbReference>
<dbReference type="GO" id="GO:0010037">
    <property type="term" value="P:response to carbon dioxide"/>
    <property type="evidence" value="ECO:0007669"/>
    <property type="project" value="Ensembl"/>
</dbReference>
<dbReference type="GO" id="GO:0070723">
    <property type="term" value="P:response to cholesterol"/>
    <property type="evidence" value="ECO:0007669"/>
    <property type="project" value="Ensembl"/>
</dbReference>
<dbReference type="GO" id="GO:0032355">
    <property type="term" value="P:response to estradiol"/>
    <property type="evidence" value="ECO:0007669"/>
    <property type="project" value="Ensembl"/>
</dbReference>
<dbReference type="GO" id="GO:0043627">
    <property type="term" value="P:response to estrogen"/>
    <property type="evidence" value="ECO:0007669"/>
    <property type="project" value="Ensembl"/>
</dbReference>
<dbReference type="GO" id="GO:0033595">
    <property type="term" value="P:response to genistein"/>
    <property type="evidence" value="ECO:0007669"/>
    <property type="project" value="Ensembl"/>
</dbReference>
<dbReference type="GO" id="GO:0060416">
    <property type="term" value="P:response to growth hormone"/>
    <property type="evidence" value="ECO:0007669"/>
    <property type="project" value="Ensembl"/>
</dbReference>
<dbReference type="GO" id="GO:0001666">
    <property type="term" value="P:response to hypoxia"/>
    <property type="evidence" value="ECO:0007669"/>
    <property type="project" value="Ensembl"/>
</dbReference>
<dbReference type="GO" id="GO:1904400">
    <property type="term" value="P:response to Thyroid stimulating hormone"/>
    <property type="evidence" value="ECO:0007669"/>
    <property type="project" value="Ensembl"/>
</dbReference>
<dbReference type="GO" id="GO:1905225">
    <property type="term" value="P:response to thyrotropin-releasing hormone"/>
    <property type="evidence" value="ECO:0007669"/>
    <property type="project" value="Ensembl"/>
</dbReference>
<dbReference type="GO" id="GO:0097068">
    <property type="term" value="P:response to thyroxine"/>
    <property type="evidence" value="ECO:0007669"/>
    <property type="project" value="Ensembl"/>
</dbReference>
<dbReference type="GO" id="GO:0032571">
    <property type="term" value="P:response to vitamin K"/>
    <property type="evidence" value="ECO:0007669"/>
    <property type="project" value="Ensembl"/>
</dbReference>
<dbReference type="CDD" id="cd00054">
    <property type="entry name" value="EGF_CA"/>
    <property type="match status" value="1"/>
</dbReference>
<dbReference type="CDD" id="cd00190">
    <property type="entry name" value="Tryp_SPc"/>
    <property type="match status" value="1"/>
</dbReference>
<dbReference type="FunFam" id="2.10.25.10:FF:000259">
    <property type="entry name" value="Coagulation factor VII"/>
    <property type="match status" value="1"/>
</dbReference>
<dbReference type="FunFam" id="2.10.25.10:FF:000420">
    <property type="entry name" value="Coagulation factor VII"/>
    <property type="match status" value="1"/>
</dbReference>
<dbReference type="FunFam" id="2.40.10.10:FF:000013">
    <property type="entry name" value="Coagulation factor X"/>
    <property type="match status" value="1"/>
</dbReference>
<dbReference type="FunFam" id="4.10.740.10:FF:000001">
    <property type="entry name" value="vitamin K-dependent protein S"/>
    <property type="match status" value="1"/>
</dbReference>
<dbReference type="Gene3D" id="4.10.740.10">
    <property type="entry name" value="Coagulation Factor IX"/>
    <property type="match status" value="1"/>
</dbReference>
<dbReference type="Gene3D" id="2.10.25.10">
    <property type="entry name" value="Laminin"/>
    <property type="match status" value="2"/>
</dbReference>
<dbReference type="Gene3D" id="2.40.10.10">
    <property type="entry name" value="Trypsin-like serine proteases"/>
    <property type="match status" value="2"/>
</dbReference>
<dbReference type="InterPro" id="IPR017857">
    <property type="entry name" value="Coagulation_fac-like_Gla_dom"/>
</dbReference>
<dbReference type="InterPro" id="IPR001881">
    <property type="entry name" value="EGF-like_Ca-bd_dom"/>
</dbReference>
<dbReference type="InterPro" id="IPR000742">
    <property type="entry name" value="EGF-like_dom"/>
</dbReference>
<dbReference type="InterPro" id="IPR000152">
    <property type="entry name" value="EGF-type_Asp/Asn_hydroxyl_site"/>
</dbReference>
<dbReference type="InterPro" id="IPR018097">
    <property type="entry name" value="EGF_Ca-bd_CS"/>
</dbReference>
<dbReference type="InterPro" id="IPR035972">
    <property type="entry name" value="GLA-like_dom_SF"/>
</dbReference>
<dbReference type="InterPro" id="IPR000294">
    <property type="entry name" value="GLA_domain"/>
</dbReference>
<dbReference type="InterPro" id="IPR012224">
    <property type="entry name" value="Pept_S1A_FX"/>
</dbReference>
<dbReference type="InterPro" id="IPR050442">
    <property type="entry name" value="Peptidase_S1_coag_factors"/>
</dbReference>
<dbReference type="InterPro" id="IPR009003">
    <property type="entry name" value="Peptidase_S1_PA"/>
</dbReference>
<dbReference type="InterPro" id="IPR043504">
    <property type="entry name" value="Peptidase_S1_PA_chymotrypsin"/>
</dbReference>
<dbReference type="InterPro" id="IPR001314">
    <property type="entry name" value="Peptidase_S1A"/>
</dbReference>
<dbReference type="InterPro" id="IPR001254">
    <property type="entry name" value="Trypsin_dom"/>
</dbReference>
<dbReference type="InterPro" id="IPR018114">
    <property type="entry name" value="TRYPSIN_HIS"/>
</dbReference>
<dbReference type="InterPro" id="IPR033116">
    <property type="entry name" value="TRYPSIN_SER"/>
</dbReference>
<dbReference type="PANTHER" id="PTHR24278">
    <property type="entry name" value="COAGULATION FACTOR"/>
    <property type="match status" value="1"/>
</dbReference>
<dbReference type="PANTHER" id="PTHR24278:SF26">
    <property type="entry name" value="COAGULATION FACTOR VII"/>
    <property type="match status" value="1"/>
</dbReference>
<dbReference type="Pfam" id="PF00008">
    <property type="entry name" value="EGF"/>
    <property type="match status" value="1"/>
</dbReference>
<dbReference type="Pfam" id="PF14670">
    <property type="entry name" value="FXa_inhibition"/>
    <property type="match status" value="1"/>
</dbReference>
<dbReference type="Pfam" id="PF00594">
    <property type="entry name" value="Gla"/>
    <property type="match status" value="1"/>
</dbReference>
<dbReference type="Pfam" id="PF00089">
    <property type="entry name" value="Trypsin"/>
    <property type="match status" value="1"/>
</dbReference>
<dbReference type="PIRSF" id="PIRSF001143">
    <property type="entry name" value="Factor_X"/>
    <property type="match status" value="1"/>
</dbReference>
<dbReference type="PRINTS" id="PR00722">
    <property type="entry name" value="CHYMOTRYPSIN"/>
</dbReference>
<dbReference type="PRINTS" id="PR00010">
    <property type="entry name" value="EGFBLOOD"/>
</dbReference>
<dbReference type="PRINTS" id="PR00001">
    <property type="entry name" value="GLABLOOD"/>
</dbReference>
<dbReference type="SMART" id="SM00181">
    <property type="entry name" value="EGF"/>
    <property type="match status" value="2"/>
</dbReference>
<dbReference type="SMART" id="SM00179">
    <property type="entry name" value="EGF_CA"/>
    <property type="match status" value="1"/>
</dbReference>
<dbReference type="SMART" id="SM00069">
    <property type="entry name" value="GLA"/>
    <property type="match status" value="1"/>
</dbReference>
<dbReference type="SMART" id="SM00020">
    <property type="entry name" value="Tryp_SPc"/>
    <property type="match status" value="1"/>
</dbReference>
<dbReference type="SUPFAM" id="SSF57196">
    <property type="entry name" value="EGF/Laminin"/>
    <property type="match status" value="1"/>
</dbReference>
<dbReference type="SUPFAM" id="SSF57630">
    <property type="entry name" value="GLA-domain"/>
    <property type="match status" value="1"/>
</dbReference>
<dbReference type="SUPFAM" id="SSF50494">
    <property type="entry name" value="Trypsin-like serine proteases"/>
    <property type="match status" value="1"/>
</dbReference>
<dbReference type="PROSITE" id="PS00010">
    <property type="entry name" value="ASX_HYDROXYL"/>
    <property type="match status" value="1"/>
</dbReference>
<dbReference type="PROSITE" id="PS00022">
    <property type="entry name" value="EGF_1"/>
    <property type="match status" value="1"/>
</dbReference>
<dbReference type="PROSITE" id="PS01186">
    <property type="entry name" value="EGF_2"/>
    <property type="match status" value="1"/>
</dbReference>
<dbReference type="PROSITE" id="PS50026">
    <property type="entry name" value="EGF_3"/>
    <property type="match status" value="1"/>
</dbReference>
<dbReference type="PROSITE" id="PS01187">
    <property type="entry name" value="EGF_CA"/>
    <property type="match status" value="1"/>
</dbReference>
<dbReference type="PROSITE" id="PS00011">
    <property type="entry name" value="GLA_1"/>
    <property type="match status" value="1"/>
</dbReference>
<dbReference type="PROSITE" id="PS50998">
    <property type="entry name" value="GLA_2"/>
    <property type="match status" value="1"/>
</dbReference>
<dbReference type="PROSITE" id="PS50240">
    <property type="entry name" value="TRYPSIN_DOM"/>
    <property type="match status" value="1"/>
</dbReference>
<dbReference type="PROSITE" id="PS00134">
    <property type="entry name" value="TRYPSIN_HIS"/>
    <property type="match status" value="1"/>
</dbReference>
<dbReference type="PROSITE" id="PS00135">
    <property type="entry name" value="TRYPSIN_SER"/>
    <property type="match status" value="1"/>
</dbReference>
<accession>P08709</accession>
<accession>B0YJC8</accession>
<accession>Q14339</accession>
<accession>Q5JVF1</accession>
<accession>Q5JVF2</accession>
<accession>Q9UD52</accession>
<accession>Q9UD53</accession>
<accession>Q9UD54</accession>
<protein>
    <recommendedName>
        <fullName>Coagulation factor VII</fullName>
        <ecNumber>3.4.21.21</ecNumber>
    </recommendedName>
    <alternativeName>
        <fullName>Proconvertin</fullName>
    </alternativeName>
    <alternativeName>
        <fullName>Serum prothrombin conversion accelerator</fullName>
        <shortName>SPCA</shortName>
    </alternativeName>
    <innName>Eptacog alfa</innName>
    <component>
        <recommendedName>
            <fullName>Factor VII light chain</fullName>
        </recommendedName>
    </component>
    <component>
        <recommendedName>
            <fullName>Factor VII heavy chain</fullName>
        </recommendedName>
    </component>
</protein>
<sequence>MVSQALRLLCLLLGLQGCLAAGGVAKASGGETRDMPWKPGPHRVFVTQEEAHGVLHRRRRANAFLEELRPGSLERECKEEQCSFEEAREIFKDAERTKLFWISYSDGDQCASSPCQNGGSCKDQLQSYICFCLPAFEGRNCETHKDDQLICVNENGGCEQYCSDHTGTKRSCRCHEGYSLLADGVSCTPTVEYPCGKIPILEKRNASKPQGRIVGGKVCPKGECPWQVLLLVNGAQLCGGTLINTIWVVSAAHCFDKIKNWRNLIAVLGEHDLSEHDGDEQSRRVAQVIIPSTYVPGTTNHDIALLRLHQPVVLTDHVVPLCLPERTFSERTLAFVRFSLVSGWGQLLDRGATALELMVLNVPRLMTQDCLQQSRKVGDSPNITEYMFCAGYSDGSKDSCKGDSGGPHATHYRGTWYLTGIVSWGQGCATVGHFGVYTRVSQYIEWLQKLMRSEPRPGVLLRAPFP</sequence>
<proteinExistence type="evidence at protein level"/>